<feature type="chain" id="PRO_0000315703" description="Activating molecule in BECN1-regulated autophagy protein 1">
    <location>
        <begin position="1"/>
        <end position="1298"/>
    </location>
</feature>
<feature type="repeat" description="WD 1">
    <location>
        <begin position="51"/>
        <end position="90"/>
    </location>
</feature>
<feature type="repeat" description="WD 2">
    <location>
        <begin position="93"/>
        <end position="133"/>
    </location>
</feature>
<feature type="repeat" description="WD 3">
    <location>
        <begin position="135"/>
        <end position="175"/>
    </location>
</feature>
<feature type="region of interest" description="Interaction with DDB1" evidence="16">
    <location>
        <begin position="1"/>
        <end position="22"/>
    </location>
</feature>
<feature type="region of interest" description="Disordered" evidence="2">
    <location>
        <begin position="254"/>
        <end position="284"/>
    </location>
</feature>
<feature type="region of interest" description="Disordered" evidence="2">
    <location>
        <begin position="343"/>
        <end position="413"/>
    </location>
</feature>
<feature type="region of interest" description="Disordered" evidence="2">
    <location>
        <begin position="458"/>
        <end position="494"/>
    </location>
</feature>
<feature type="region of interest" description="Disordered" evidence="2">
    <location>
        <begin position="538"/>
        <end position="561"/>
    </location>
</feature>
<feature type="region of interest" description="Disordered" evidence="2">
    <location>
        <begin position="590"/>
        <end position="690"/>
    </location>
</feature>
<feature type="region of interest" description="Disordered" evidence="2">
    <location>
        <begin position="747"/>
        <end position="796"/>
    </location>
</feature>
<feature type="region of interest" description="Disordered" evidence="2">
    <location>
        <begin position="1060"/>
        <end position="1079"/>
    </location>
</feature>
<feature type="region of interest" description="Disordered" evidence="2">
    <location>
        <begin position="1112"/>
        <end position="1143"/>
    </location>
</feature>
<feature type="region of interest" description="Disordered" evidence="2">
    <location>
        <begin position="1190"/>
        <end position="1214"/>
    </location>
</feature>
<feature type="region of interest" description="Disordered" evidence="2">
    <location>
        <begin position="1227"/>
        <end position="1298"/>
    </location>
</feature>
<feature type="short sequence motif" description="PxP motif 1" evidence="12 18">
    <location>
        <begin position="275"/>
        <end position="281"/>
    </location>
</feature>
<feature type="short sequence motif" description="LIR" evidence="11">
    <location>
        <begin position="1043"/>
        <end position="1052"/>
    </location>
</feature>
<feature type="short sequence motif" description="TQT motif 1" evidence="4">
    <location>
        <begin position="1104"/>
        <end position="1106"/>
    </location>
</feature>
<feature type="short sequence motif" description="TQT motif 2" evidence="4">
    <location>
        <begin position="1116"/>
        <end position="1118"/>
    </location>
</feature>
<feature type="short sequence motif" description="PxP motif 2" evidence="12 18">
    <location>
        <begin position="1206"/>
        <end position="1212"/>
    </location>
</feature>
<feature type="compositionally biased region" description="Polar residues" evidence="2">
    <location>
        <begin position="254"/>
        <end position="266"/>
    </location>
</feature>
<feature type="compositionally biased region" description="Pro residues" evidence="2">
    <location>
        <begin position="268"/>
        <end position="277"/>
    </location>
</feature>
<feature type="compositionally biased region" description="Polar residues" evidence="2">
    <location>
        <begin position="354"/>
        <end position="385"/>
    </location>
</feature>
<feature type="compositionally biased region" description="Polar residues" evidence="2">
    <location>
        <begin position="458"/>
        <end position="467"/>
    </location>
</feature>
<feature type="compositionally biased region" description="Polar residues" evidence="2">
    <location>
        <begin position="547"/>
        <end position="561"/>
    </location>
</feature>
<feature type="compositionally biased region" description="Polar residues" evidence="2">
    <location>
        <begin position="590"/>
        <end position="601"/>
    </location>
</feature>
<feature type="compositionally biased region" description="Low complexity" evidence="2">
    <location>
        <begin position="602"/>
        <end position="614"/>
    </location>
</feature>
<feature type="compositionally biased region" description="Low complexity" evidence="2">
    <location>
        <begin position="628"/>
        <end position="639"/>
    </location>
</feature>
<feature type="compositionally biased region" description="Polar residues" evidence="2">
    <location>
        <begin position="661"/>
        <end position="674"/>
    </location>
</feature>
<feature type="compositionally biased region" description="Acidic residues" evidence="2">
    <location>
        <begin position="772"/>
        <end position="781"/>
    </location>
</feature>
<feature type="compositionally biased region" description="Polar residues" evidence="2">
    <location>
        <begin position="1060"/>
        <end position="1075"/>
    </location>
</feature>
<feature type="compositionally biased region" description="Polar residues" evidence="2">
    <location>
        <begin position="1191"/>
        <end position="1212"/>
    </location>
</feature>
<feature type="site" description="Cleavage; by caspase-6, caspase-7 and caspase-8" evidence="7">
    <location>
        <begin position="482"/>
        <end position="483"/>
    </location>
</feature>
<feature type="modified residue" description="Phosphoserine; by MTOR" evidence="8">
    <location>
        <position position="52"/>
    </location>
</feature>
<feature type="modified residue" description="Phosphoserine" evidence="36">
    <location>
        <position position="328"/>
    </location>
</feature>
<feature type="modified residue" description="Phosphoserine" evidence="36">
    <location>
        <position position="394"/>
    </location>
</feature>
<feature type="modified residue" description="Phosphoserine" evidence="36">
    <location>
        <position position="443"/>
    </location>
</feature>
<feature type="modified residue" description="Phosphoserine" evidence="36">
    <location>
        <position position="635"/>
    </location>
</feature>
<feature type="modified residue" description="Phosphoserine" evidence="33 34 35 36">
    <location>
        <position position="639"/>
    </location>
</feature>
<feature type="modified residue" description="Asymmetric dimethylarginine" evidence="1">
    <location>
        <position position="747"/>
    </location>
</feature>
<feature type="modified residue" description="Phosphoserine; by IKKA" evidence="17">
    <location>
        <position position="1043"/>
    </location>
</feature>
<feature type="modified residue" description="Phosphoserine" evidence="36">
    <location>
        <position position="1205"/>
    </location>
</feature>
<feature type="cross-link" description="Glycyl lysine isopeptide (Lys-Gly) (interchain with G-Cter in ubiquitin)" evidence="1">
    <location>
        <position position="45"/>
    </location>
</feature>
<feature type="splice variant" id="VSP_030654" description="In isoform 4, isoform 5 and isoform 6." evidence="26 27 30">
    <location>
        <begin position="255"/>
        <end position="344"/>
    </location>
</feature>
<feature type="splice variant" id="VSP_030655" description="In isoform 3 and isoform 6." evidence="29 30">
    <location>
        <begin position="691"/>
        <end position="719"/>
    </location>
</feature>
<feature type="splice variant" id="VSP_030656" description="In isoform 5." evidence="26">
    <original>R</original>
    <variation>RRSLALSPRLEYSGAILAHCKLRLPGSCHSPASASQVAGTTGAHHHARLIFAFLVEMEFHHVSQAGLELLTSGDLPTSASQSAGITGVSHRAWP</variation>
    <location>
        <position position="691"/>
    </location>
</feature>
<feature type="splice variant" id="VSP_030657" description="In isoform 2." evidence="25">
    <location>
        <begin position="721"/>
        <end position="780"/>
    </location>
</feature>
<feature type="splice variant" id="VSP_045989" description="In isoform 6." evidence="30">
    <original>WWDFTKFDLPEISNASV</original>
    <variation>GGGTSLSLTSLKSVMLP</variation>
    <location>
        <begin position="864"/>
        <end position="880"/>
    </location>
</feature>
<feature type="splice variant" id="VSP_045990" description="In isoform 6." evidence="30">
    <location>
        <begin position="881"/>
        <end position="1298"/>
    </location>
</feature>
<feature type="sequence variant" id="VAR_085051" description="Found in a child with spina bifida; uncertain significance; reduced induction of autophagy." evidence="20">
    <original>T</original>
    <variation>M</variation>
    <location>
        <position position="80"/>
    </location>
</feature>
<feature type="sequence variant" id="VAR_085052" description="Found in a fetus with encephalocele; uncertain significance; reduced induction of autophagy." evidence="20">
    <original>L</original>
    <variation>F</variation>
    <location>
        <position position="364"/>
    </location>
</feature>
<feature type="sequence variant" id="VAR_085053" description="Found in a child with spina bifida; uncertain significance; reduced induction of autophagy." evidence="20">
    <original>S</original>
    <variation>F</variation>
    <location>
        <position position="833"/>
    </location>
</feature>
<feature type="sequence variant" id="VAR_085054" description="Found in a fetus with encephalocele and spina bifida; uncertain significance; reduced induction of autophagy." evidence="20">
    <original>M</original>
    <variation>V</variation>
    <location>
        <position position="974"/>
    </location>
</feature>
<feature type="sequence variant" id="VAR_085055" description="Found in a fetus with anencephaly and spina bifida; uncertain significance; does not impair induction of autophagy." evidence="20">
    <original>S</original>
    <variation>F</variation>
    <location>
        <position position="1043"/>
    </location>
</feature>
<feature type="mutagenesis site" description="Abolished interaction with DDB1." evidence="16">
    <location>
        <begin position="1"/>
        <end position="43"/>
    </location>
</feature>
<feature type="mutagenesis site" description="Abolished interaction with DDB1." evidence="16">
    <location>
        <begin position="1"/>
        <end position="22"/>
    </location>
</feature>
<feature type="mutagenesis site" description="Impaired phosphorylation by MTOR, leading to strong induction of autophagy. Does not affect interaction with DDB1." evidence="8">
    <original>S</original>
    <variation>A</variation>
    <location>
        <position position="52"/>
    </location>
</feature>
<feature type="mutagenesis site" description="Phospho-mimetic mutant; abolished ability to promote autophagy. Does not affect interaction with DDB1." evidence="8">
    <original>S</original>
    <variation>E</variation>
    <location>
        <position position="52"/>
    </location>
</feature>
<feature type="mutagenesis site" description="Abolished interaction with PPP2CA and MYC, leading to decreased MYC dephosphorylation; when associated with 1206-A--A-1208. Abolished interaction with PPP2CA and FOXO3, leading to decreased FOXO3 dephosphorylation; when associated with 1206-A--A-1208." evidence="12 18">
    <original>PQP</original>
    <variation>AQA</variation>
    <location>
        <begin position="275"/>
        <end position="277"/>
    </location>
</feature>
<feature type="mutagenesis site" description="Abolished cleavage by caspases without affecting cleavage by calpains." evidence="7">
    <original>D</original>
    <variation>A</variation>
    <location>
        <position position="482"/>
    </location>
</feature>
<feature type="mutagenesis site" description="Abolished interaction with TRAF6." evidence="8">
    <original>E</original>
    <variation>A</variation>
    <location>
        <position position="620"/>
    </location>
</feature>
<feature type="mutagenesis site" description="Does not affect interaction with TRAF6." evidence="8">
    <original>E</original>
    <variation>A</variation>
    <location>
        <position position="642"/>
    </location>
</feature>
<feature type="mutagenesis site" description="Abolished interaction with TRAF6." evidence="8">
    <original>E</original>
    <variation>A</variation>
    <location>
        <position position="682"/>
    </location>
</feature>
<feature type="mutagenesis site" description="Does not affect interaction with TRAF6." evidence="8">
    <original>E</original>
    <variation>A</variation>
    <location>
        <position position="918"/>
    </location>
</feature>
<feature type="mutagenesis site" description="Abolished phosphorylation by CHUK/IKKA, leading to impaired interaction with ATG8 family proteins and reduced mitophagic activity." evidence="17">
    <original>S</original>
    <variation>A</variation>
    <location>
        <position position="1043"/>
    </location>
</feature>
<feature type="mutagenesis site" description="Phospho-mimetic mutant; increased interaction with ATG8 family proteins and increased mitophagic activity." evidence="17">
    <original>S</original>
    <variation>D</variation>
    <location>
        <position position="1043"/>
    </location>
</feature>
<feature type="mutagenesis site" description="Abolished interaction with LC3 (MAP1LC3A, MAP1LC3B or MAP1LC3C)." evidence="11">
    <original>WDQL</original>
    <variation>ADQA</variation>
    <location>
        <begin position="1049"/>
        <end position="1052"/>
    </location>
</feature>
<feature type="mutagenesis site" description="In TAT1 mutant; abolished interaction with DYNLL1 and DYNLL2, leading to constitutive induction of autophagy." evidence="4">
    <original>Q</original>
    <variation>A</variation>
    <location>
        <position position="1105"/>
    </location>
</feature>
<feature type="mutagenesis site" description="In TAT2 mutant; abolished interaction with DYNLL1 and DYNLL2, leading to constitutive induction of autophagy." evidence="4">
    <original>Q</original>
    <variation>A</variation>
    <location>
        <position position="1117"/>
    </location>
</feature>
<feature type="mutagenesis site" description="Does not affect interaction with TRAF6." evidence="8">
    <original>E</original>
    <variation>A</variation>
    <location>
        <position position="1134"/>
    </location>
</feature>
<feature type="mutagenesis site" description="Abolished interaction with PPP2CA and MYC, leading to decreased MYC dephosphorylation; when associated with 275-A--A-277. Abolished interaction with PPP2CA and FOXO3, leading to decreased FOXO3 dephosphorylation; when associated with 275-A--A-277." evidence="12">
    <original>PQP</original>
    <variation>AQA</variation>
    <location>
        <begin position="1206"/>
        <end position="1208"/>
    </location>
</feature>
<feature type="sequence conflict" description="In Ref. 3; BAA91067." evidence="31" ref="3">
    <original>W</original>
    <variation>R</variation>
    <location>
        <position position="165"/>
    </location>
</feature>
<feature type="sequence conflict" description="In Ref. 4; AL834190." evidence="31" ref="4">
    <original>N</original>
    <variation>K</variation>
    <location>
        <position position="793"/>
    </location>
</feature>
<feature type="sequence conflict" description="In Ref. 3; BAB14457." evidence="31" ref="3">
    <original>K</original>
    <variation>E</variation>
    <location>
        <position position="869"/>
    </location>
</feature>
<feature type="sequence conflict" description="In Ref. 3; BAB14457." evidence="31" ref="3">
    <original>Q</original>
    <variation>L</variation>
    <location>
        <position position="983"/>
    </location>
</feature>
<feature type="sequence conflict" description="In Ref. 7; AAH45609." evidence="31" ref="7">
    <original>Q</original>
    <variation>E</variation>
    <location>
        <position position="1105"/>
    </location>
</feature>
<feature type="sequence conflict" description="In Ref. 7; AAH45609." evidence="31" ref="7">
    <original>L</original>
    <variation>V</variation>
    <location>
        <position position="1268"/>
    </location>
</feature>
<accession>Q9C0C7</accession>
<accession>A6XN33</accession>
<accession>D3DQP8</accession>
<accession>G3V193</accession>
<accession>Q86XD6</accession>
<accession>Q9H8Z0</accession>
<accession>Q9NXE7</accession>
<reference key="1">
    <citation type="journal article" date="2007" name="Nature">
        <title>Ambra1 regulates autophagy and development of the nervous system.</title>
        <authorList>
            <person name="Maria Fimia G."/>
            <person name="Stoykova A."/>
            <person name="Romagnoli A."/>
            <person name="Giunta L."/>
            <person name="Di Bartolomeo S."/>
            <person name="Nardacci R."/>
            <person name="Corazzari M."/>
            <person name="Fuoco C."/>
            <person name="Ucar A."/>
            <person name="Schwartz P."/>
            <person name="Gruss P."/>
            <person name="Piacentini M."/>
            <person name="Chowdhury K."/>
            <person name="Cecconi F."/>
        </authorList>
    </citation>
    <scope>NUCLEOTIDE SEQUENCE [MRNA] (ISOFORM 3)</scope>
    <source>
        <tissue>Brain</tissue>
    </source>
</reference>
<reference key="2">
    <citation type="journal article" date="2000" name="DNA Res.">
        <title>Prediction of the coding sequences of unidentified human genes. XIX. The complete sequences of 100 new cDNA clones from brain which code for large proteins in vitro.</title>
        <authorList>
            <person name="Nagase T."/>
            <person name="Kikuno R."/>
            <person name="Hattori A."/>
            <person name="Kondo Y."/>
            <person name="Okumura K."/>
            <person name="Ohara O."/>
        </authorList>
    </citation>
    <scope>NUCLEOTIDE SEQUENCE [LARGE SCALE MRNA] (ISOFORM 2)</scope>
    <source>
        <tissue>Brain</tissue>
    </source>
</reference>
<reference key="3">
    <citation type="journal article" date="2004" name="Nat. Genet.">
        <title>Complete sequencing and characterization of 21,243 full-length human cDNAs.</title>
        <authorList>
            <person name="Ota T."/>
            <person name="Suzuki Y."/>
            <person name="Nishikawa T."/>
            <person name="Otsuki T."/>
            <person name="Sugiyama T."/>
            <person name="Irie R."/>
            <person name="Wakamatsu A."/>
            <person name="Hayashi K."/>
            <person name="Sato H."/>
            <person name="Nagai K."/>
            <person name="Kimura K."/>
            <person name="Makita H."/>
            <person name="Sekine M."/>
            <person name="Obayashi M."/>
            <person name="Nishi T."/>
            <person name="Shibahara T."/>
            <person name="Tanaka T."/>
            <person name="Ishii S."/>
            <person name="Yamamoto J."/>
            <person name="Saito K."/>
            <person name="Kawai Y."/>
            <person name="Isono Y."/>
            <person name="Nakamura Y."/>
            <person name="Nagahari K."/>
            <person name="Murakami K."/>
            <person name="Yasuda T."/>
            <person name="Iwayanagi T."/>
            <person name="Wagatsuma M."/>
            <person name="Shiratori A."/>
            <person name="Sudo H."/>
            <person name="Hosoiri T."/>
            <person name="Kaku Y."/>
            <person name="Kodaira H."/>
            <person name="Kondo H."/>
            <person name="Sugawara M."/>
            <person name="Takahashi M."/>
            <person name="Kanda K."/>
            <person name="Yokoi T."/>
            <person name="Furuya T."/>
            <person name="Kikkawa E."/>
            <person name="Omura Y."/>
            <person name="Abe K."/>
            <person name="Kamihara K."/>
            <person name="Katsuta N."/>
            <person name="Sato K."/>
            <person name="Tanikawa M."/>
            <person name="Yamazaki M."/>
            <person name="Ninomiya K."/>
            <person name="Ishibashi T."/>
            <person name="Yamashita H."/>
            <person name="Murakawa K."/>
            <person name="Fujimori K."/>
            <person name="Tanai H."/>
            <person name="Kimata M."/>
            <person name="Watanabe M."/>
            <person name="Hiraoka S."/>
            <person name="Chiba Y."/>
            <person name="Ishida S."/>
            <person name="Ono Y."/>
            <person name="Takiguchi S."/>
            <person name="Watanabe S."/>
            <person name="Yosida M."/>
            <person name="Hotuta T."/>
            <person name="Kusano J."/>
            <person name="Kanehori K."/>
            <person name="Takahashi-Fujii A."/>
            <person name="Hara H."/>
            <person name="Tanase T.-O."/>
            <person name="Nomura Y."/>
            <person name="Togiya S."/>
            <person name="Komai F."/>
            <person name="Hara R."/>
            <person name="Takeuchi K."/>
            <person name="Arita M."/>
            <person name="Imose N."/>
            <person name="Musashino K."/>
            <person name="Yuuki H."/>
            <person name="Oshima A."/>
            <person name="Sasaki N."/>
            <person name="Aotsuka S."/>
            <person name="Yoshikawa Y."/>
            <person name="Matsunawa H."/>
            <person name="Ichihara T."/>
            <person name="Shiohata N."/>
            <person name="Sano S."/>
            <person name="Moriya S."/>
            <person name="Momiyama H."/>
            <person name="Satoh N."/>
            <person name="Takami S."/>
            <person name="Terashima Y."/>
            <person name="Suzuki O."/>
            <person name="Nakagawa S."/>
            <person name="Senoh A."/>
            <person name="Mizoguchi H."/>
            <person name="Goto Y."/>
            <person name="Shimizu F."/>
            <person name="Wakebe H."/>
            <person name="Hishigaki H."/>
            <person name="Watanabe T."/>
            <person name="Sugiyama A."/>
            <person name="Takemoto M."/>
            <person name="Kawakami B."/>
            <person name="Yamazaki M."/>
            <person name="Watanabe K."/>
            <person name="Kumagai A."/>
            <person name="Itakura S."/>
            <person name="Fukuzumi Y."/>
            <person name="Fujimori Y."/>
            <person name="Komiyama M."/>
            <person name="Tashiro H."/>
            <person name="Tanigami A."/>
            <person name="Fujiwara T."/>
            <person name="Ono T."/>
            <person name="Yamada K."/>
            <person name="Fujii Y."/>
            <person name="Ozaki K."/>
            <person name="Hirao M."/>
            <person name="Ohmori Y."/>
            <person name="Kawabata A."/>
            <person name="Hikiji T."/>
            <person name="Kobatake N."/>
            <person name="Inagaki H."/>
            <person name="Ikema Y."/>
            <person name="Okamoto S."/>
            <person name="Okitani R."/>
            <person name="Kawakami T."/>
            <person name="Noguchi S."/>
            <person name="Itoh T."/>
            <person name="Shigeta K."/>
            <person name="Senba T."/>
            <person name="Matsumura K."/>
            <person name="Nakajima Y."/>
            <person name="Mizuno T."/>
            <person name="Morinaga M."/>
            <person name="Sasaki M."/>
            <person name="Togashi T."/>
            <person name="Oyama M."/>
            <person name="Hata H."/>
            <person name="Watanabe M."/>
            <person name="Komatsu T."/>
            <person name="Mizushima-Sugano J."/>
            <person name="Satoh T."/>
            <person name="Shirai Y."/>
            <person name="Takahashi Y."/>
            <person name="Nakagawa K."/>
            <person name="Okumura K."/>
            <person name="Nagase T."/>
            <person name="Nomura N."/>
            <person name="Kikuchi H."/>
            <person name="Masuho Y."/>
            <person name="Yamashita R."/>
            <person name="Nakai K."/>
            <person name="Yada T."/>
            <person name="Nakamura Y."/>
            <person name="Ohara O."/>
            <person name="Isogai T."/>
            <person name="Sugano S."/>
        </authorList>
    </citation>
    <scope>NUCLEOTIDE SEQUENCE [LARGE SCALE MRNA] (ISOFORM 5)</scope>
    <scope>NUCLEOTIDE SEQUENCE [LARGE SCALE MRNA] OF 464-1298</scope>
</reference>
<reference key="4">
    <citation type="journal article" date="2007" name="BMC Genomics">
        <title>The full-ORF clone resource of the German cDNA consortium.</title>
        <authorList>
            <person name="Bechtel S."/>
            <person name="Rosenfelder H."/>
            <person name="Duda A."/>
            <person name="Schmidt C.P."/>
            <person name="Ernst U."/>
            <person name="Wellenreuther R."/>
            <person name="Mehrle A."/>
            <person name="Schuster C."/>
            <person name="Bahr A."/>
            <person name="Bloecker H."/>
            <person name="Heubner D."/>
            <person name="Hoerlein A."/>
            <person name="Michel G."/>
            <person name="Wedler H."/>
            <person name="Koehrer K."/>
            <person name="Ottenwaelder B."/>
            <person name="Poustka A."/>
            <person name="Wiemann S."/>
            <person name="Schupp I."/>
        </authorList>
    </citation>
    <scope>NUCLEOTIDE SEQUENCE [LARGE SCALE MRNA] (ISOFORM 6)</scope>
    <source>
        <tissue>Melanoma</tissue>
    </source>
</reference>
<reference key="5">
    <citation type="journal article" date="2006" name="Nature">
        <title>Human chromosome 11 DNA sequence and analysis including novel gene identification.</title>
        <authorList>
            <person name="Taylor T.D."/>
            <person name="Noguchi H."/>
            <person name="Totoki Y."/>
            <person name="Toyoda A."/>
            <person name="Kuroki Y."/>
            <person name="Dewar K."/>
            <person name="Lloyd C."/>
            <person name="Itoh T."/>
            <person name="Takeda T."/>
            <person name="Kim D.-W."/>
            <person name="She X."/>
            <person name="Barlow K.F."/>
            <person name="Bloom T."/>
            <person name="Bruford E."/>
            <person name="Chang J.L."/>
            <person name="Cuomo C.A."/>
            <person name="Eichler E."/>
            <person name="FitzGerald M.G."/>
            <person name="Jaffe D.B."/>
            <person name="LaButti K."/>
            <person name="Nicol R."/>
            <person name="Park H.-S."/>
            <person name="Seaman C."/>
            <person name="Sougnez C."/>
            <person name="Yang X."/>
            <person name="Zimmer A.R."/>
            <person name="Zody M.C."/>
            <person name="Birren B.W."/>
            <person name="Nusbaum C."/>
            <person name="Fujiyama A."/>
            <person name="Hattori M."/>
            <person name="Rogers J."/>
            <person name="Lander E.S."/>
            <person name="Sakaki Y."/>
        </authorList>
    </citation>
    <scope>NUCLEOTIDE SEQUENCE [LARGE SCALE GENOMIC DNA]</scope>
</reference>
<reference key="6">
    <citation type="submission" date="2005-09" db="EMBL/GenBank/DDBJ databases">
        <authorList>
            <person name="Mural R.J."/>
            <person name="Istrail S."/>
            <person name="Sutton G.G."/>
            <person name="Florea L."/>
            <person name="Halpern A.L."/>
            <person name="Mobarry C.M."/>
            <person name="Lippert R."/>
            <person name="Walenz B."/>
            <person name="Shatkay H."/>
            <person name="Dew I."/>
            <person name="Miller J.R."/>
            <person name="Flanigan M.J."/>
            <person name="Edwards N.J."/>
            <person name="Bolanos R."/>
            <person name="Fasulo D."/>
            <person name="Halldorsson B.V."/>
            <person name="Hannenhalli S."/>
            <person name="Turner R."/>
            <person name="Yooseph S."/>
            <person name="Lu F."/>
            <person name="Nusskern D.R."/>
            <person name="Shue B.C."/>
            <person name="Zheng X.H."/>
            <person name="Zhong F."/>
            <person name="Delcher A.L."/>
            <person name="Huson D.H."/>
            <person name="Kravitz S.A."/>
            <person name="Mouchard L."/>
            <person name="Reinert K."/>
            <person name="Remington K.A."/>
            <person name="Clark A.G."/>
            <person name="Waterman M.S."/>
            <person name="Eichler E.E."/>
            <person name="Adams M.D."/>
            <person name="Hunkapiller M.W."/>
            <person name="Myers E.W."/>
            <person name="Venter J.C."/>
        </authorList>
    </citation>
    <scope>NUCLEOTIDE SEQUENCE [LARGE SCALE GENOMIC DNA]</scope>
</reference>
<reference key="7">
    <citation type="journal article" date="2004" name="Genome Res.">
        <title>The status, quality, and expansion of the NIH full-length cDNA project: the Mammalian Gene Collection (MGC).</title>
        <authorList>
            <consortium name="The MGC Project Team"/>
        </authorList>
    </citation>
    <scope>NUCLEOTIDE SEQUENCE [LARGE SCALE MRNA] (ISOFORM 4)</scope>
    <source>
        <tissue>Testis</tissue>
    </source>
</reference>
<reference key="8">
    <citation type="journal article" date="2006" name="Mol. Cell">
        <title>A family of diverse Cul4-Ddb1-interacting proteins includes Cdt2, which is required for S phase destruction of the replication factor Cdt1.</title>
        <authorList>
            <person name="Jin J."/>
            <person name="Arias E.E."/>
            <person name="Chen J."/>
            <person name="Harper J.W."/>
            <person name="Walter J.C."/>
        </authorList>
    </citation>
    <scope>IDENTIFICATION IN A DCX (DDB1-CUL4-X-BOX) E3 UBIQUITIN-PROTEIN LIGASE COMPLEX</scope>
</reference>
<reference key="9">
    <citation type="journal article" date="2008" name="Mol. Cell">
        <title>Kinase-selective enrichment enables quantitative phosphoproteomics of the kinome across the cell cycle.</title>
        <authorList>
            <person name="Daub H."/>
            <person name="Olsen J.V."/>
            <person name="Bairlein M."/>
            <person name="Gnad F."/>
            <person name="Oppermann F.S."/>
            <person name="Korner R."/>
            <person name="Greff Z."/>
            <person name="Keri G."/>
            <person name="Stemmann O."/>
            <person name="Mann M."/>
        </authorList>
    </citation>
    <scope>IDENTIFICATION BY MASS SPECTROMETRY [LARGE SCALE ANALYSIS]</scope>
    <source>
        <tissue>Cervix carcinoma</tissue>
    </source>
</reference>
<reference key="10">
    <citation type="journal article" date="2008" name="Proc. Natl. Acad. Sci. U.S.A.">
        <title>A quantitative atlas of mitotic phosphorylation.</title>
        <authorList>
            <person name="Dephoure N."/>
            <person name="Zhou C."/>
            <person name="Villen J."/>
            <person name="Beausoleil S.A."/>
            <person name="Bakalarski C.E."/>
            <person name="Elledge S.J."/>
            <person name="Gygi S.P."/>
        </authorList>
    </citation>
    <scope>PHOSPHORYLATION [LARGE SCALE ANALYSIS] AT SER-639</scope>
    <scope>IDENTIFICATION BY MASS SPECTROMETRY [LARGE SCALE ANALYSIS]</scope>
    <source>
        <tissue>Cervix carcinoma</tissue>
    </source>
</reference>
<reference key="11">
    <citation type="journal article" date="2009" name="Sci. Signal.">
        <title>Quantitative phosphoproteomic analysis of T cell receptor signaling reveals system-wide modulation of protein-protein interactions.</title>
        <authorList>
            <person name="Mayya V."/>
            <person name="Lundgren D.H."/>
            <person name="Hwang S.-I."/>
            <person name="Rezaul K."/>
            <person name="Wu L."/>
            <person name="Eng J.K."/>
            <person name="Rodionov V."/>
            <person name="Han D.K."/>
        </authorList>
    </citation>
    <scope>PHOSPHORYLATION [LARGE SCALE ANALYSIS] AT SER-639</scope>
    <scope>IDENTIFICATION BY MASS SPECTROMETRY [LARGE SCALE ANALYSIS]</scope>
    <source>
        <tissue>Leukemic T-cell</tissue>
    </source>
</reference>
<reference key="12">
    <citation type="journal article" date="2010" name="J. Cell Biol.">
        <title>The dynamic interaction of AMBRA1 with the dynein motor complex regulates mammalian autophagy.</title>
        <authorList>
            <person name="Di Bartolomeo S."/>
            <person name="Corazzari M."/>
            <person name="Nazio F."/>
            <person name="Oliverio S."/>
            <person name="Lisi G."/>
            <person name="Antonioli M."/>
            <person name="Pagliarini V."/>
            <person name="Matteoni S."/>
            <person name="Fuoco C."/>
            <person name="Giunta L."/>
            <person name="D'Amelio M."/>
            <person name="Nardacci R."/>
            <person name="Romagnoli A."/>
            <person name="Piacentini M."/>
            <person name="Cecconi F."/>
            <person name="Fimia G.M."/>
        </authorList>
    </citation>
    <scope>FUNCTION</scope>
    <scope>SUBCELLULAR LOCATION</scope>
    <scope>INTERACTION WITH DYNLL1 AND DYNLL2</scope>
    <scope>MUTAGENESIS OF GLN-1105 AND GLN-1117</scope>
</reference>
<reference key="13">
    <citation type="journal article" date="2010" name="Sci. Signal.">
        <title>Quantitative phosphoproteomics reveals widespread full phosphorylation site occupancy during mitosis.</title>
        <authorList>
            <person name="Olsen J.V."/>
            <person name="Vermeulen M."/>
            <person name="Santamaria A."/>
            <person name="Kumar C."/>
            <person name="Miller M.L."/>
            <person name="Jensen L.J."/>
            <person name="Gnad F."/>
            <person name="Cox J."/>
            <person name="Jensen T.S."/>
            <person name="Nigg E.A."/>
            <person name="Brunak S."/>
            <person name="Mann M."/>
        </authorList>
    </citation>
    <scope>PHOSPHORYLATION [LARGE SCALE ANALYSIS] AT SER-639</scope>
    <scope>IDENTIFICATION BY MASS SPECTROMETRY [LARGE SCALE ANALYSIS]</scope>
    <source>
        <tissue>Cervix carcinoma</tissue>
    </source>
</reference>
<reference key="14">
    <citation type="journal article" date="2011" name="EMBO J.">
        <title>Mitochondrial BCL-2 inhibits AMBRA1-induced autophagy.</title>
        <authorList>
            <person name="Strappazzon F."/>
            <person name="Vietri-Rudan M."/>
            <person name="Campello S."/>
            <person name="Nazio F."/>
            <person name="Florenzano F."/>
            <person name="Fimia G.M."/>
            <person name="Piacentini M."/>
            <person name="Levine B."/>
            <person name="Cecconi F."/>
        </authorList>
    </citation>
    <scope>FUNCTION</scope>
    <scope>INTERACTION WITH BCL2 AND BECN1</scope>
    <scope>SUBCELLULAR LOCATION</scope>
</reference>
<reference key="15">
    <citation type="journal article" date="2011" name="J. Neurosci.">
        <title>Parkin interacts with Ambra1 to induce mitophagy.</title>
        <authorList>
            <person name="Van Humbeeck C."/>
            <person name="Cornelissen T."/>
            <person name="Hofkens H."/>
            <person name="Mandemakers W."/>
            <person name="Gevaert K."/>
            <person name="De Strooper B."/>
            <person name="Vandenberghe W."/>
        </authorList>
    </citation>
    <scope>FUNCTION</scope>
</reference>
<reference key="16">
    <citation type="journal article" date="2012" name="Cell Death Differ.">
        <title>Proteolysis of Ambra1 during apoptosis has a role in the inhibition of the autophagic pro-survival response.</title>
        <authorList>
            <person name="Pagliarini V."/>
            <person name="Wirawan E."/>
            <person name="Romagnoli A."/>
            <person name="Ciccosanti F."/>
            <person name="Lisi G."/>
            <person name="Lippens S."/>
            <person name="Cecconi F."/>
            <person name="Fimia G.M."/>
            <person name="Vandenabeele P."/>
            <person name="Corazzari M."/>
            <person name="Piacentini M."/>
        </authorList>
    </citation>
    <scope>PROTEOLYTIC CLEAVAGE</scope>
    <scope>MUTAGENESIS OF ASP-482</scope>
</reference>
<reference key="17">
    <citation type="journal article" date="2012" name="Proc. Natl. Acad. Sci. U.S.A.">
        <title>N-terminal acetylome analyses and functional insights of the N-terminal acetyltransferase NatB.</title>
        <authorList>
            <person name="Van Damme P."/>
            <person name="Lasa M."/>
            <person name="Polevoda B."/>
            <person name="Gazquez C."/>
            <person name="Elosegui-Artola A."/>
            <person name="Kim D.S."/>
            <person name="De Juan-Pardo E."/>
            <person name="Demeyer K."/>
            <person name="Hole K."/>
            <person name="Larrea E."/>
            <person name="Timmerman E."/>
            <person name="Prieto J."/>
            <person name="Arnesen T."/>
            <person name="Sherman F."/>
            <person name="Gevaert K."/>
            <person name="Aldabe R."/>
        </authorList>
    </citation>
    <scope>IDENTIFICATION BY MASS SPECTROMETRY [LARGE SCALE ANALYSIS]</scope>
</reference>
<reference key="18">
    <citation type="journal article" date="2013" name="Cell">
        <title>Beclin 2 functions in autophagy, degradation of G protein-coupled receptors, and metabolism.</title>
        <authorList>
            <person name="He C."/>
            <person name="Wei Y."/>
            <person name="Sun K."/>
            <person name="Li B."/>
            <person name="Dong X."/>
            <person name="Zou Z."/>
            <person name="Liu Y."/>
            <person name="Kinch L.N."/>
            <person name="Khan S."/>
            <person name="Sinha S."/>
            <person name="Xavier R.J."/>
            <person name="Grishin N.V."/>
            <person name="Xiao G."/>
            <person name="Eskelinen E.L."/>
            <person name="Scherer P.E."/>
            <person name="Whistler J.L."/>
            <person name="Levine B."/>
        </authorList>
    </citation>
    <scope>INTERACTION WITH BECN2</scope>
</reference>
<reference key="19">
    <citation type="journal article" date="2013" name="J. Proteome Res.">
        <title>Toward a comprehensive characterization of a human cancer cell phosphoproteome.</title>
        <authorList>
            <person name="Zhou H."/>
            <person name="Di Palma S."/>
            <person name="Preisinger C."/>
            <person name="Peng M."/>
            <person name="Polat A.N."/>
            <person name="Heck A.J."/>
            <person name="Mohammed S."/>
        </authorList>
    </citation>
    <scope>PHOSPHORYLATION [LARGE SCALE ANALYSIS] AT SER-328; SER-394; SER-443; SER-635; SER-639 AND SER-1205</scope>
    <scope>IDENTIFICATION BY MASS SPECTROMETRY [LARGE SCALE ANALYSIS]</scope>
    <source>
        <tissue>Cervix carcinoma</tissue>
        <tissue>Erythroleukemia</tissue>
    </source>
</reference>
<reference key="20">
    <citation type="journal article" date="2013" name="Nat. Cell Biol.">
        <title>mTOR inhibits autophagy by controlling ULK1 ubiquitylation, self-association and function through AMBRA1 and TRAF6.</title>
        <authorList>
            <person name="Nazio F."/>
            <person name="Strappazzon F."/>
            <person name="Antonioli M."/>
            <person name="Bielli P."/>
            <person name="Cianfanelli V."/>
            <person name="Bordi M."/>
            <person name="Gretzmeier C."/>
            <person name="Dengjel J."/>
            <person name="Piacentini M."/>
            <person name="Fimia G.M."/>
            <person name="Cecconi F."/>
        </authorList>
    </citation>
    <scope>FUNCTION</scope>
    <scope>PATHWAY</scope>
    <scope>INTERACTION WITH TRAF6</scope>
    <scope>PHOSPHORYLATION AT SER-52</scope>
    <scope>MUTAGENESIS OF SER-52; GLU-620; GLU-642; GLU-682; GLU-918 AND GLU-1134</scope>
</reference>
<reference key="21">
    <citation type="journal article" date="2014" name="Dev. Cell">
        <title>AMBRA1 interplay with cullin E3 ubiquitin ligases regulates autophagy dynamics.</title>
        <authorList>
            <person name="Antonioli M."/>
            <person name="Albiero F."/>
            <person name="Nazio F."/>
            <person name="Vescovo T."/>
            <person name="Perdomo A.B."/>
            <person name="Corazzari M."/>
            <person name="Marsella C."/>
            <person name="Piselli P."/>
            <person name="Gretzmeier C."/>
            <person name="Dengjel J."/>
            <person name="Cecconi F."/>
            <person name="Piacentini M."/>
            <person name="Fimia G.M."/>
        </authorList>
    </citation>
    <scope>FUNCTION</scope>
    <scope>UBIQUITINATION</scope>
    <scope>INTERACTION WITH CUL4 AND DDB1</scope>
    <scope>MUTAGENESIS OF SER-52</scope>
</reference>
<reference key="22">
    <citation type="journal article" date="2014" name="J. Proteomics">
        <title>An enzyme assisted RP-RPLC approach for in-depth analysis of human liver phosphoproteome.</title>
        <authorList>
            <person name="Bian Y."/>
            <person name="Song C."/>
            <person name="Cheng K."/>
            <person name="Dong M."/>
            <person name="Wang F."/>
            <person name="Huang J."/>
            <person name="Sun D."/>
            <person name="Wang L."/>
            <person name="Ye M."/>
            <person name="Zou H."/>
        </authorList>
    </citation>
    <scope>IDENTIFICATION BY MASS SPECTROMETRY [LARGE SCALE ANALYSIS]</scope>
    <source>
        <tissue>Liver</tissue>
    </source>
</reference>
<reference key="23">
    <citation type="journal article" date="2014" name="PLoS ONE">
        <title>Ambra1 is an essential regulator of autophagy and apoptosis in SW620 cells: pro-survival role of Ambra1.</title>
        <authorList>
            <person name="Gu W."/>
            <person name="Wan D."/>
            <person name="Qian Q."/>
            <person name="Yi B."/>
            <person name="He Z."/>
            <person name="Gu Y."/>
            <person name="Wang L."/>
            <person name="He S."/>
        </authorList>
    </citation>
    <scope>FUNCTION</scope>
</reference>
<reference key="24">
    <citation type="journal article" date="2015" name="Cell Cycle">
        <title>AMBRA1 and BECLIN 1 interplay in the crosstalk between autophagy and cell proliferation.</title>
        <authorList>
            <person name="Cianfanelli V."/>
            <person name="D'Orazio M."/>
            <person name="Cecconi F."/>
        </authorList>
    </citation>
    <scope>FUNCTION</scope>
    <scope>INTERACTION WITH PPP2CA AND BECN1</scope>
</reference>
<reference key="25">
    <citation type="journal article" date="2015" name="Cell Death Differ.">
        <title>AMBRA1 is able to induce mitophagy via LC3 binding, regardless of PARKIN and p62/SQSTM1.</title>
        <authorList>
            <person name="Strappazzon F."/>
            <person name="Nazio F."/>
            <person name="Corrado M."/>
            <person name="Cianfanelli V."/>
            <person name="Romagnoli A."/>
            <person name="Fimia G.M."/>
            <person name="Campello S."/>
            <person name="Nardacci R."/>
            <person name="Piacentini M."/>
            <person name="Campanella M."/>
            <person name="Cecconi F."/>
        </authorList>
    </citation>
    <scope>FUNCTION</scope>
    <scope>SUBCELLULAR LOCATION</scope>
    <scope>DOMAIN</scope>
    <scope>INTERACTION WITH MAP1LC3B</scope>
    <scope>MUTAGENESIS OF 1049-TRP--LEU-1052</scope>
</reference>
<reference key="26">
    <citation type="journal article" date="2015" name="Nat. Cell Biol.">
        <title>AMBRA1 links autophagy to cell proliferation and tumorigenesis by promoting c-Myc dephosphorylation and degradation.</title>
        <authorList>
            <person name="Cianfanelli V."/>
            <person name="Fuoco C."/>
            <person name="Lorente M."/>
            <person name="Salazar M."/>
            <person name="Quondamatteo F."/>
            <person name="Gherardini P.F."/>
            <person name="De Zio D."/>
            <person name="Nazio F."/>
            <person name="Antonioli M."/>
            <person name="D'Orazio M."/>
            <person name="Skobo T."/>
            <person name="Bordi M."/>
            <person name="Rohde M."/>
            <person name="Dalla Valle L."/>
            <person name="Helmer-Citterich M."/>
            <person name="Gretzmeier C."/>
            <person name="Dengjel J."/>
            <person name="Fimia G.M."/>
            <person name="Piacentini M."/>
            <person name="Di Bartolomeo S."/>
            <person name="Velasco G."/>
            <person name="Cecconi F."/>
        </authorList>
    </citation>
    <scope>FUNCTION</scope>
    <scope>INTERACTION WITH BECN1; PPP2CA AND ULK1</scope>
    <scope>PXP MOTIF</scope>
    <scope>DOMAIN</scope>
    <scope>PHOSPHORYLATION</scope>
    <scope>MUTAGENESIS OF 275-PRO--PRO-277 AND 1206-PRO--PRO-1208</scope>
</reference>
<reference key="27">
    <citation type="journal article" date="2015" name="Nat. Cell Biol.">
        <authorList>
            <person name="Cianfanelli V."/>
            <person name="Fuoco C."/>
            <person name="Lorente M."/>
            <person name="Salazar M."/>
            <person name="Quondamatteo F."/>
            <person name="Gherardini P.F."/>
            <person name="De Zio D."/>
            <person name="Nazio F."/>
            <person name="Antonioli M."/>
            <person name="D'Orazio M."/>
            <person name="Skobo T."/>
            <person name="Bordi M."/>
            <person name="Rohde M."/>
            <person name="Dalla Valle L."/>
            <person name="Helmer-Citterich M."/>
            <person name="Gretzmeier C."/>
            <person name="Dengjel J."/>
            <person name="Fimia G.M."/>
            <person name="Piacentini M."/>
            <person name="Di Bartolomeo S."/>
            <person name="Velasco G."/>
            <person name="Cecconi F."/>
        </authorList>
    </citation>
    <scope>ERRATUM OF PUBMED:25438055</scope>
</reference>
<reference key="28">
    <citation type="journal article" date="2017" name="Autophagy">
        <title>MIR7-3HG, a MYC-dependent modulator of cell proliferation, inhibits autophagy by a regulatory loop involving AMBRA1.</title>
        <authorList>
            <person name="Capizzi M."/>
            <person name="Strappazzon F."/>
            <person name="Cianfanelli V."/>
            <person name="Papaleo E."/>
            <person name="Cecconi F."/>
        </authorList>
    </citation>
    <scope>INDUCTION</scope>
</reference>
<reference key="29">
    <citation type="journal article" date="2018" name="Dev. Cell">
        <title>AMBRA1 controls regulatory T-cell differentiation and homeostasis upstream of the FOXO3-FOXP3 axis.</title>
        <authorList>
            <person name="Becher J."/>
            <person name="Simula L."/>
            <person name="Volpe E."/>
            <person name="Procaccini C."/>
            <person name="La Rocca C."/>
            <person name="D'Acunzo P."/>
            <person name="Cianfanelli V."/>
            <person name="Strappazzon F."/>
            <person name="Caruana I."/>
            <person name="Nazio F."/>
            <person name="Weber G."/>
            <person name="Gigantino V."/>
            <person name="Botti G."/>
            <person name="Ciccosanti F."/>
            <person name="Borsellino G."/>
            <person name="Campello S."/>
            <person name="Mandolesi G."/>
            <person name="De Bardi M."/>
            <person name="Fimia G.M."/>
            <person name="D'Amelio M."/>
            <person name="Ruffini F."/>
            <person name="Furlan R."/>
            <person name="Centonze D."/>
            <person name="Martino G."/>
            <person name="Braghetta P."/>
            <person name="Chrisam M."/>
            <person name="Bonaldo P."/>
            <person name="Matarese G."/>
            <person name="Locatelli F."/>
            <person name="Battistini L."/>
            <person name="Cecconi F."/>
        </authorList>
    </citation>
    <scope>FUNCTION</scope>
    <scope>INTERACTION WITH PPP2CA</scope>
    <scope>DOMAIN</scope>
    <scope>INDUCTION</scope>
    <scope>MUTAGENESIS OF 275-PRO--PRO-277 AND 1206-PRO--PRO-1208</scope>
</reference>
<reference key="30">
    <citation type="journal article" date="2018" name="EMBO J.">
        <title>CRL4AMBRA1 targets Elongin C for ubiquitination and degradation to modulate CRL5 signaling.</title>
        <authorList>
            <person name="Chen S.H."/>
            <person name="Jang G.M."/>
            <person name="Huettenhain R."/>
            <person name="Gordon D.E."/>
            <person name="Du D."/>
            <person name="Newton B.W."/>
            <person name="Johnson J.R."/>
            <person name="Hiatt J."/>
            <person name="Hultquist J.F."/>
            <person name="Johnson T.L."/>
            <person name="Liu Y.L."/>
            <person name="Burton L.A."/>
            <person name="Ye J."/>
            <person name="Reichermeier K.M."/>
            <person name="Stroud R.M."/>
            <person name="Marson A."/>
            <person name="Debnath J."/>
            <person name="Gross J.D."/>
            <person name="Krogan N.J."/>
        </authorList>
    </citation>
    <scope>FUNCTION</scope>
    <scope>IDENTIFICATION IN A DCX (DDB1-CUL4-X-BOX) E3 UBIQUITIN-PROTEIN LIGASE COMPLEX</scope>
    <scope>PATHWAY</scope>
    <scope>INTERACTION WITH DDB1</scope>
    <scope>MUTAGENESIS OF 1-MET--ALA-22 AND 1-MET--GLU-43</scope>
</reference>
<reference key="31">
    <citation type="journal article" date="2018" name="Nat. Commun.">
        <title>HUWE1 E3 ligase promotes PINK1/PARKIN-independent mitophagy by regulating AMBRA1 activation via IKKalpha.</title>
        <authorList>
            <person name="Di Rita A."/>
            <person name="Peschiaroli A."/>
            <person name="D'Acunzo P."/>
            <person name="Strobbe D."/>
            <person name="Hu Z."/>
            <person name="Gruber J."/>
            <person name="Nygaard M."/>
            <person name="Lambrughi M."/>
            <person name="Melino G."/>
            <person name="Papaleo E."/>
            <person name="Dengjel J."/>
            <person name="El Alaoui S."/>
            <person name="Campanella M."/>
            <person name="Doetsch V."/>
            <person name="Rogov V.V."/>
            <person name="Strappazzon F."/>
            <person name="Cecconi F."/>
        </authorList>
    </citation>
    <scope>FUNCTION</scope>
    <scope>INTERACTION WITH HUWE1</scope>
    <scope>DOMAIN</scope>
    <scope>INTERACTION WITH GABARAP AND MAP1LC3B</scope>
    <scope>PHOSPHORYLATION AT SER-1043</scope>
    <scope>MUTAGENESIS OF SER-1043</scope>
</reference>
<reference key="32">
    <citation type="journal article" date="2019" name="Sci. Adv.">
        <title>Autophagy induction in atrophic muscle cells requires ULK1 activation by TRIM32 through unanchored K63-linked polyubiquitin chains.</title>
        <authorList>
            <person name="Di Rienzo M."/>
            <person name="Antonioli M."/>
            <person name="Fusco C."/>
            <person name="Liu Y."/>
            <person name="Mari M."/>
            <person name="Orhon I."/>
            <person name="Refolo G."/>
            <person name="Germani F."/>
            <person name="Corazzari M."/>
            <person name="Romagnoli A."/>
            <person name="Ciccosanti F."/>
            <person name="Mandriani B."/>
            <person name="Pellico M.T."/>
            <person name="De La Torre R."/>
            <person name="Ding H."/>
            <person name="Dentice M."/>
            <person name="Neri M."/>
            <person name="Ferlini A."/>
            <person name="Reggiori F."/>
            <person name="Kulesz-Martin M."/>
            <person name="Piacentini M."/>
            <person name="Merla G."/>
            <person name="Fimia G.M."/>
        </authorList>
    </citation>
    <scope>FUNCTION</scope>
    <scope>INTERACTION WITH TRIM32</scope>
</reference>
<reference key="33">
    <citation type="journal article" date="2020" name="J. Biol. Chem.">
        <title>The autophagy protein Ambra1 regulates gene expression by supporting novel transcriptional complexes.</title>
        <authorList>
            <person name="Schoenherr C."/>
            <person name="Byron A."/>
            <person name="Griffith B."/>
            <person name="Loftus A."/>
            <person name="Wills J.C."/>
            <person name="Munro A.F."/>
            <person name="von Kriegsheim A."/>
            <person name="Frame M.C."/>
        </authorList>
    </citation>
    <scope>SUBCELLULAR LOCATION</scope>
</reference>
<reference key="34">
    <citation type="journal article" date="2021" name="Nature">
        <title>AMBRA1 regulates cyclin D to guard S-phase entry and genomic integrity.</title>
        <authorList>
            <person name="Maiani E."/>
            <person name="Milletti G."/>
            <person name="Nazio F."/>
            <person name="Holdgaard S.G."/>
            <person name="Bartkova J."/>
            <person name="Rizza S."/>
            <person name="Cianfanelli V."/>
            <person name="Lorente M."/>
            <person name="Simoneschi D."/>
            <person name="Di Marco M."/>
            <person name="D'Acunzo P."/>
            <person name="Di Leo L."/>
            <person name="Rasmussen R."/>
            <person name="Montagna C."/>
            <person name="Raciti M."/>
            <person name="De Stefanis C."/>
            <person name="Gabicagogeascoa E."/>
            <person name="Rona G."/>
            <person name="Salvador N."/>
            <person name="Pupo E."/>
            <person name="Merchut-Maya J.M."/>
            <person name="Daniel C.J."/>
            <person name="Carinci M."/>
            <person name="Cesarini V."/>
            <person name="O'sullivan A."/>
            <person name="Jeong Y.T."/>
            <person name="Bordi M."/>
            <person name="Russo F."/>
            <person name="Campello S."/>
            <person name="Gallo A."/>
            <person name="Filomeni G."/>
            <person name="Lanzetti L."/>
            <person name="Sears R.C."/>
            <person name="Hamerlik P."/>
            <person name="Bartolazzi A."/>
            <person name="Hynds R.E."/>
            <person name="Pearce D.R."/>
            <person name="Swanton C."/>
            <person name="Pagano M."/>
            <person name="Velasco G."/>
            <person name="Papaleo E."/>
            <person name="De Zio D."/>
            <person name="Maya-Mendoza A."/>
            <person name="Locatelli F."/>
            <person name="Bartek J."/>
            <person name="Cecconi F."/>
        </authorList>
    </citation>
    <scope>FUNCTION</scope>
    <scope>IDENTIFICATION IN A DCX (DDB1-CUL4-X-BOX) E3 UBIQUITIN-PROTEIN LIGASE COMPLEX</scope>
    <scope>PATHWAY</scope>
</reference>
<reference key="35">
    <citation type="journal article" date="2021" name="Nature">
        <title>CRL4AMBRA1 is a master regulator of D-type cyclins.</title>
        <authorList>
            <person name="Simoneschi D."/>
            <person name="Rona G."/>
            <person name="Zhou N."/>
            <person name="Jeong Y.T."/>
            <person name="Jiang S."/>
            <person name="Milletti G."/>
            <person name="Arbini A.A."/>
            <person name="O'Sullivan A."/>
            <person name="Wang A.A."/>
            <person name="Nithikasem S."/>
            <person name="Keegan S."/>
            <person name="Siu Y."/>
            <person name="Cianfanelli V."/>
            <person name="Maiani E."/>
            <person name="Nazio F."/>
            <person name="Cecconi F."/>
            <person name="Boccalatte F."/>
            <person name="Fenyoe D."/>
            <person name="Jones D.R."/>
            <person name="Busino L."/>
            <person name="Pagano M."/>
        </authorList>
    </citation>
    <scope>FUNCTION</scope>
    <scope>PATHWAY</scope>
</reference>
<reference key="36">
    <citation type="journal article" date="2021" name="Nature">
        <title>The AMBRA1 E3 ligase adaptor regulates the stability of cyclin D.</title>
        <authorList>
            <person name="Chaikovsky A.C."/>
            <person name="Li C."/>
            <person name="Jeng E.E."/>
            <person name="Loebell S."/>
            <person name="Lee M.C."/>
            <person name="Murray C.W."/>
            <person name="Cheng R."/>
            <person name="Demeter J."/>
            <person name="Swaney D.L."/>
            <person name="Chen S.H."/>
            <person name="Newton B.W."/>
            <person name="Johnson J.R."/>
            <person name="Drainas A.P."/>
            <person name="Shue Y.T."/>
            <person name="Seoane J.A."/>
            <person name="Srinivasan P."/>
            <person name="He A."/>
            <person name="Yoshida A."/>
            <person name="Hipkins S.Q."/>
            <person name="McCrea E."/>
            <person name="Poltorack C.D."/>
            <person name="Krogan N.J."/>
            <person name="Diehl J.A."/>
            <person name="Kong C."/>
            <person name="Jackson P.K."/>
            <person name="Curtis C."/>
            <person name="Petrov D.A."/>
            <person name="Bassik M.C."/>
            <person name="Winslow M.M."/>
            <person name="Sage J."/>
        </authorList>
    </citation>
    <scope>FUNCTION</scope>
    <scope>IDENTIFICATION IN A DCX (DDB1-CUL4-X-BOX) E3 UBIQUITIN-PROTEIN LIGASE COMPLEX</scope>
    <scope>PATHWAY</scope>
</reference>
<reference key="37">
    <citation type="journal article" date="2020" name="Hum. Mutat.">
        <title>Rare mutations in the autophagy-regulating gene AMBRA1 contribute to human neural tube defects.</title>
        <authorList>
            <person name="Ye J."/>
            <person name="Tong Y."/>
            <person name="Lv J."/>
            <person name="Peng R."/>
            <person name="Chen S."/>
            <person name="Kuang L."/>
            <person name="Su K."/>
            <person name="Zheng Y."/>
            <person name="Zhang T."/>
            <person name="Zhang F."/>
            <person name="Jin L."/>
            <person name="Yang X."/>
            <person name="Wang H."/>
        </authorList>
    </citation>
    <scope>VARIANTS MET-80; PHE-364; PHE-833; VAL-974 AND PHE-1043</scope>
    <scope>CHARACTERIZATION OF VARIANTS MET-80; PHE-364; PHE-833; VAL-974 AND PHE-1043</scope>
    <scope>FUNCTION</scope>
</reference>
<comment type="function">
    <text evidence="1 4 5 6 8 10 11 12 13 14 16 17 18 19 20 22 23 24">Substrate-recognition component of a DCX (DDB1-CUL4-X-box) E3 ubiquitin-protein ligase complex involved in cell cycle control and autophagy (PubMed:20921139, PubMed:23524951, PubMed:24587252, PubMed:32333458, PubMed:33854232, PubMed:33854235, PubMed:33854239). The DCX(AMBRA1) complex specifically mediates the polyubiquitination of target proteins such as BECN1, CCND1, CCND2, CCND3, ELOC and ULK1 (PubMed:23524951, PubMed:33854232, PubMed:33854235, PubMed:33854239). Acts as an upstream master regulator of the transition from G1 to S cell phase: AMBRA1 specifically recognizes and binds phosphorylated cyclin-D (CCND1, CCND2 and CCND3), leading to cyclin-D ubiquitination by the DCX(AMBRA1) complex and subsequent degradation (PubMed:33854232, PubMed:33854235, PubMed:33854239). By controlling the transition from G1 to S phase and cyclin-D degradation, AMBRA1 acts as a tumor suppressor that promotes genomic integrity during DNA replication and counteracts developmental abnormalities and tumor growth (PubMed:33854232, PubMed:33854235, PubMed:33854239). AMBRA1 also regulates the cell cycle by promoting MYC dephosphorylation and degradation independently of the DCX(AMBRA1) complex: acts via interaction with the catalytic subunit of protein phosphatase 2A (PPP2CA), which enhances interaction between PPP2CA and MYC, leading to MYC dephosphorylation and degradation (PubMed:25438055, PubMed:25803737). Acts as a regulator of Cul5-RING (CRL5) E3 ubiquitin-protein ligase complexes by mediating ubiquitination and degradation of Elongin-C (ELOC) component of CRL5 complexes (PubMed:25499913, PubMed:30166453). Acts as a key regulator of autophagy by modulating the BECN1-PIK3C3 complex: controls protein turnover during neuronal development, and regulates normal cell survival and proliferation (PubMed:21358617). In normal conditions, AMBRA1 is tethered to the cytoskeleton via interaction with dyneins DYNLL1 and DYNLL2 (PubMed:20921139). Upon autophagy induction, AMBRA1 is released from the cytoskeletal docking site to induce autophagosome nucleation by mediating ubiquitination of proteins involved in autophagy (PubMed:20921139). The DCX(AMBRA1) complex mediates 'Lys-63'-linked ubiquitination of BECN1, increasing the association between BECN1 and PIK3C3 to promote PIK3C3 activity (By similarity). In collaboration with TRAF6, AMBRA1 mediates 'Lys-63'-linked ubiquitination of ULK1 following autophagy induction, promoting ULK1 stability and kinase activity (PubMed:23524951). Also activates ULK1 via interaction with TRIM32: TRIM32 stimulates ULK1 through unanchored 'Lys-63'-linked polyubiquitin chains (PubMed:31123703). Also acts as an activator of mitophagy via interaction with PRKN and LC3 proteins (MAP1LC3A, MAP1LC3B or MAP1LC3C); possibly by bringing damaged mitochondria onto autophagosomes (PubMed:21753002, PubMed:25215947). Also activates mitophagy by acting as a cofactor for HUWE1; acts by promoting HUWE1-mediated ubiquitination of MFN2 (PubMed:30217973). AMBRA1 is also involved in regulatory T-cells (Treg) differentiation by promoting FOXO3 dephosphorylation independently of the DCX(AMBRA1) complex: acts via interaction with PPP2CA, which enhances interaction between PPP2CA and FOXO3, leading to FOXO3 dephosphorylation and stabilization (PubMed:30513302). May act as a regulator of intracellular trafficking, regulating the localization of active PTK2/FAK and SRC (By similarity). Also involved in transcription regulation by acting as a scaffold for protein complexes at chromatin (By similarity).</text>
</comment>
<comment type="pathway">
    <text evidence="8 16 22 23 24">Protein modification; protein ubiquitination.</text>
</comment>
<comment type="subunit">
    <text evidence="1 3 4 5 8 9 11 12 13 14 16 17 18 19 22 24">Component of the DCX(AMBRA1) E3 ubiquitin ligase complex, also named CRL4(AMBRA1), at least composed of CUL4 (CUL4A or CUL4B), DDB1, AMBRA1 and RBX1 (PubMed:16949367, PubMed:25499913, PubMed:30166453, PubMed:33854232, PubMed:33854239). Interacts with BECN1 (PubMed:21358617, PubMed:25438055). Probably forms a complex with BECN1 and PIK3C3 (By similarity). Interacts with BECN2 (PubMed:23954414). Interacts with BCL2; leading to prevent interaction with BCN1 and autophagy, interaction is disrupted upon autophagy induction (PubMed:21358617). Interacts with ULK1 (PubMed:25438055). Interacts (via PxP motifs) with PPP2CA; enhancing interaction between PPP2CA and MYC or FOXO3 (PubMed:25438055, PubMed:30513302). Forms a complex with PPP2CA and BECN1; AMBRA1 and BECN1 components of the complex regulate MYC stability via different pathways (PubMed:25803737). Interacts (TQT motifs) with DYNLL1 and DYNLL2; tethering AMBRA1 and the BECN1-PIK3C3 complex in absence of autophagy (PubMed:20921139). Interacts with TRAF6; interaction is required to mediate 'Lys-63'-linked ubiquitination of ULK1 (PubMed:23524951). Interacts with TRIM32; promoting activation of ULK1 by TRIM32 via unanchored 'Lys-63'-linked polyubiquitin chains (PubMed:31123703). Interacts with PRKN (By similarity). Interacts (via LIR motif) with LC3 (MAP1LC3A, MAP1LC3B or MAP1LC3C) (PubMed:25215947, PubMed:30217973). Interacts with HUWE1 (PubMed:30217973). Interacts with PTK2/FAK (By similarity). Interacts with SRC; required for SRC trafficking to autophagosomes (By similarity).</text>
</comment>
<comment type="interaction">
    <interactant intactId="EBI-2512975">
        <id>Q9C0C7</id>
    </interactant>
    <interactant intactId="EBI-77694">
        <id>P10415</id>
        <label>BCL2</label>
    </interactant>
    <organismsDiffer>false</organismsDiffer>
    <experiments>10</experiments>
</comment>
<comment type="interaction">
    <interactant intactId="EBI-2512975">
        <id>Q9C0C7</id>
    </interactant>
    <interactant intactId="EBI-949378">
        <id>Q14457</id>
        <label>BECN1</label>
    </interactant>
    <organismsDiffer>false</organismsDiffer>
    <experiments>9</experiments>
</comment>
<comment type="interaction">
    <interactant intactId="EBI-2512975">
        <id>Q9C0C7</id>
    </interactant>
    <interactant intactId="EBI-302388">
        <id>P30153</id>
        <label>PPP2R1A</label>
    </interactant>
    <organismsDiffer>false</organismsDiffer>
    <experiments>3</experiments>
</comment>
<comment type="interaction">
    <interactant intactId="EBI-2512975">
        <id>Q9C0C7</id>
    </interactant>
    <interactant intactId="EBI-908831">
        <id>O75385</id>
        <label>ULK1</label>
    </interactant>
    <organismsDiffer>false</organismsDiffer>
    <experiments>3</experiments>
</comment>
<comment type="interaction">
    <interactant intactId="EBI-2512975">
        <id>Q9C0C7</id>
    </interactant>
    <interactant intactId="EBI-779991">
        <id>P12504</id>
        <label>vif</label>
    </interactant>
    <organismsDiffer>true</organismsDiffer>
    <experiments>5</experiments>
</comment>
<comment type="interaction">
    <interactant intactId="EBI-16042318">
        <id>Q9C0C7-3</id>
    </interactant>
    <interactant intactId="EBI-359276">
        <id>Q9Y4K3</id>
        <label>TRAF6</label>
    </interactant>
    <organismsDiffer>false</organismsDiffer>
    <experiments>2</experiments>
</comment>
<comment type="interaction">
    <interactant intactId="EBI-16042318">
        <id>Q9C0C7-3</id>
    </interactant>
    <interactant intactId="EBI-908831">
        <id>O75385</id>
        <label>ULK1</label>
    </interactant>
    <organismsDiffer>false</organismsDiffer>
    <experiments>4</experiments>
</comment>
<comment type="subcellular location">
    <subcellularLocation>
        <location evidence="4">Endoplasmic reticulum</location>
    </subcellularLocation>
    <subcellularLocation>
        <location evidence="4">Cytoplasm</location>
        <location evidence="4">Cytoskeleton</location>
    </subcellularLocation>
    <subcellularLocation>
        <location evidence="1">Cytoplasmic vesicle</location>
        <location evidence="1">Autophagosome</location>
    </subcellularLocation>
    <subcellularLocation>
        <location evidence="5 11">Mitochondrion</location>
    </subcellularLocation>
    <subcellularLocation>
        <location evidence="1">Cytoplasm</location>
        <location evidence="1">Cytosol</location>
    </subcellularLocation>
    <subcellularLocation>
        <location evidence="21">Nucleus</location>
    </subcellularLocation>
    <subcellularLocation>
        <location evidence="1">Cell junction</location>
        <location evidence="1">Focal adhesion</location>
    </subcellularLocation>
    <text evidence="1 4 5">Localizes to the cytoskeleton in absence of autophagy induction (PubMed:20921139). Upon autophagy induction, AMBRA1 relocalizes to the endoplasmic reticulum to enable autophagosome nucleation (PubMed:20921139). Partially localizes at mitochondria in normal conditions (PubMed:21358617). Also localizes to discrete punctae along the ciliary axoneme (By similarity).</text>
</comment>
<comment type="alternative products">
    <event type="alternative splicing"/>
    <isoform>
        <id>Q9C0C7-1</id>
        <name>1</name>
        <sequence type="displayed"/>
    </isoform>
    <isoform>
        <id>Q9C0C7-2</id>
        <name>2</name>
        <sequence type="described" ref="VSP_030657"/>
    </isoform>
    <isoform>
        <id>Q9C0C7-3</id>
        <name>3</name>
        <sequence type="described" ref="VSP_030655"/>
    </isoform>
    <isoform>
        <id>Q9C0C7-4</id>
        <name>4</name>
        <sequence type="described" ref="VSP_030654"/>
    </isoform>
    <isoform>
        <id>Q9C0C7-5</id>
        <name>5</name>
        <sequence type="described" ref="VSP_030654 VSP_030656"/>
    </isoform>
    <isoform>
        <id>Q9C0C7-6</id>
        <name>6</name>
        <sequence type="described" ref="VSP_030654 VSP_030655 VSP_045989 VSP_045990"/>
    </isoform>
</comment>
<comment type="induction">
    <text evidence="15 18">Negatively regulated by microRNA 7-3HG (miR7-3HG), which targets the 3' untranslated (3'-UTR) region of AMBRA1 transcripts, leading to a decrease of AMBRA1 mRNA and protein levels, thereby inhibiting autophagy (PubMed:28059583). Strongly up-regulated during egulatory T-cells (Treg) differentiation (PubMed:30513302).</text>
</comment>
<comment type="domain">
    <text evidence="12 18">The PxP motifs mediate interaction with the catalytic subunit of protein phosphatase 2A (PPP2CA).</text>
</comment>
<comment type="domain">
    <text evidence="4">The TQT motifs mediate interaction with the dynein light chain proteins DYNLL1 and DYNLL2, tethering AMBRA1 to the cytoskeleton in absence of autophagy.</text>
</comment>
<comment type="domain">
    <text evidence="11 17">The LIR motif (LC3-interacting region) is required for the interaction with the ATG8 family proteins GABARAP and MAP1LC3B.</text>
</comment>
<comment type="PTM">
    <text evidence="4 8 12 17">Phosphorylation at Ser-52 by MTOR inhibits its ability to regulate autophagy and mediate ubiquitination of ULK1 (PubMed:23524951). Phosphorylation by ULK1 in response to autophagy induction abolishes interaction with DYNLL1 and DYNLL2, releasing AMBRA1 from the cytoskeletal docking site to induce autophagosome nucleation (PubMed:20921139). Phosphorylation by MTOR inhibits interaction with PPP2CA and subsequent dephosphorylation of MYC (PubMed:25438055). Phosphorylation at Ser-1043 by CHUK/IKKA promotes its interaction with ATG8 family proteins GABARAP and MAP1LC3B and its mitophagic activity (PubMed:30217973).</text>
</comment>
<comment type="PTM">
    <text evidence="13">Ubiquitinated by RNF2 via 'Lys-48'-linkage in unstressed cells, leading to its degradation by the proteasome (PubMed:25499913). Induction of autophagy promotes stabilization via interaction with CUL4 (CUL4A or CUL4B) and DDB1 (PubMed:25499913). Upon prolonged starvation, ubiquitinated and degraded, terminating the autophagy response (PubMed:25499913).</text>
</comment>
<comment type="PTM">
    <text evidence="7">Undergoes proteolytic processing by caspase-6 (CASP6), caspase-7 (CASP7) and caspase-8 (CASP8) during apoptosis, resulting in the dismantling of the autophagic machinery and the accomplishment of the programmed cell death program (PubMed:22441670). Also cleaved by calpains during apoptosis, which mediate a complete proteolytic degradation (PubMed:22441670).</text>
</comment>
<comment type="similarity">
    <text evidence="31">Belongs to the WD repeat AMBRA1 family.</text>
</comment>
<comment type="sequence caution" evidence="31">
    <conflict type="frameshift">
        <sequence resource="EMBL-CDS" id="BAA91067"/>
    </conflict>
</comment>
<comment type="sequence caution" evidence="31">
    <conflict type="erroneous initiation">
        <sequence resource="EMBL-CDS" id="BAB14457"/>
    </conflict>
</comment>
<comment type="sequence caution" evidence="31">
    <conflict type="erroneous initiation">
        <sequence resource="EMBL-CDS" id="BAB21827"/>
    </conflict>
</comment>
<comment type="sequence caution" evidence="31">
    <molecule>Isoform 6</molecule>
    <conflict type="frameshift">
        <sequence resource="EMBL" id="AL834190"/>
    </conflict>
</comment>
<keyword id="KW-0002">3D-structure</keyword>
<keyword id="KW-0025">Alternative splicing</keyword>
<keyword id="KW-0072">Autophagy</keyword>
<keyword id="KW-0131">Cell cycle</keyword>
<keyword id="KW-0965">Cell junction</keyword>
<keyword id="KW-0963">Cytoplasm</keyword>
<keyword id="KW-0968">Cytoplasmic vesicle</keyword>
<keyword id="KW-0206">Cytoskeleton</keyword>
<keyword id="KW-0217">Developmental protein</keyword>
<keyword id="KW-0221">Differentiation</keyword>
<keyword id="KW-0256">Endoplasmic reticulum</keyword>
<keyword id="KW-1017">Isopeptide bond</keyword>
<keyword id="KW-0488">Methylation</keyword>
<keyword id="KW-0496">Mitochondrion</keyword>
<keyword id="KW-0524">Neurogenesis</keyword>
<keyword id="KW-0539">Nucleus</keyword>
<keyword id="KW-0597">Phosphoprotein</keyword>
<keyword id="KW-1267">Proteomics identification</keyword>
<keyword id="KW-1185">Reference proteome</keyword>
<keyword id="KW-0677">Repeat</keyword>
<keyword id="KW-0804">Transcription</keyword>
<keyword id="KW-0805">Transcription regulation</keyword>
<keyword id="KW-0043">Tumor suppressor</keyword>
<keyword id="KW-0832">Ubl conjugation</keyword>
<keyword id="KW-0833">Ubl conjugation pathway</keyword>
<keyword id="KW-0853">WD repeat</keyword>
<sequence length="1298" mass="142507">MKVVPEKNAVRILWGRERGARAMGAQRLLQELVEDKTRWMKWEGKRVELPDSPRSTFLLAFSPDRTLLASTHVNHNIYITEVKTGKCVHSLIGHRRTPWCVTFHPTISGLIASGCLDGEVRIWDLHGGSESWFTDSNNAIASLAFHPTAQLLLIATANEIHFWDWSRREPFAVVKTASEMERVRLVRFDPLGHYLLTAIVNPSNQQGDDEPEIPIDGTELSHYRQRALLQSQPVRRTPLLHNFLHMLSSRSSGIQVGEQSTVQDSATPSPPPPPPQPSTERPRTSAYIRLRQRVSYPTAECCQHLGILCLCSRCSGTRVPSLLPHQDSVPPASARATTPSFSFVQTEPFHPPEQASSTQQDQGLLNRPSAFSTVQSSTAGNTLRNLSLGPTRRSLGGPLSSHPSRYHREIAPGLTGSEWTRTVLSLNSRSEAESMPPPRTSASSVSLLSVLRQQEGGSQASVYTSATEGRGFPASGLATESDGGNGSSQNNSGSIRHELQCDLRRFFLEYDRLQELDQSLSGEAPQTQQAQEMLNNNIESERPGPSHQPTPHSSENNSNLSRGHLNRCRACHNLLTFNNDTLRWERTTPNYSSGEASSSWQVPSSFESVPSSGSQLPPLERTEGQTPSSSRLELSSSASPQEERTVGVAFNQETGHWERIYTQSSRSGTVSQEALHQDMPEESSEEDSLRRRLLESSLISLSRYDGAGSREHPIYPDPARLSPAAYYAQRMIQYLSRRDSIRQRSMRYQQNRLRSSTSSSSSDNQGPSVEGTDLEFEDFEDNGDRSRHRAPRNARMSAPSLGRFVPRRFLLPEYLPYAGIFHERGQPGLATHSSVNRVLAGAVIGDGQSAVASNIANTTYRLQWWDFTKFDLPEISNASVNVLVQNCKIYNDASCDISADGQLLAAFIPSSQRGFPDEGILAVYSLAPHNLGEMLYTKRFGPNAISVSLSPMGRYVMVGLASRRILLHPSTEHMVAQVFRLQQAHGGETSMRRVFNVLYPMPADQRRHVSINSARWLPEPGLGLAYGTNKGDLVICRPEALNSGVEYYWDQLNETVFTVHSNSRSSERPGTSRATWRTDRDMGLMNAIGLQPRNPATSVTSQGTQTLALQLQNAETQTEREVPEPGTAASGPGEGEGSEYGASGEDALSRIQRLMAEGGMTAVVQREQSTTMASMGGFGNNIIVSHRIHRSSQTGTEPGAAHTSSPQPSTSRGLLPEAGQLAERGLSPRTASWDQPGTPGREPTQPTLPSSSPVPIPVSLPSAEGPTLHCELTNNNHLLDGGSSRGDAAGPRGEPRNR</sequence>
<dbReference type="EMBL" id="DQ870924">
    <property type="protein sequence ID" value="ABI74670.1"/>
    <property type="molecule type" value="mRNA"/>
</dbReference>
<dbReference type="EMBL" id="AB051523">
    <property type="protein sequence ID" value="BAB21827.1"/>
    <property type="status" value="ALT_INIT"/>
    <property type="molecule type" value="mRNA"/>
</dbReference>
<dbReference type="EMBL" id="AK000301">
    <property type="protein sequence ID" value="BAA91067.1"/>
    <property type="status" value="ALT_FRAME"/>
    <property type="molecule type" value="mRNA"/>
</dbReference>
<dbReference type="EMBL" id="AK023197">
    <property type="protein sequence ID" value="BAB14457.1"/>
    <property type="status" value="ALT_INIT"/>
    <property type="molecule type" value="mRNA"/>
</dbReference>
<dbReference type="EMBL" id="AL834190">
    <property type="status" value="NOT_ANNOTATED_CDS"/>
    <property type="molecule type" value="mRNA"/>
</dbReference>
<dbReference type="EMBL" id="AC024293">
    <property type="status" value="NOT_ANNOTATED_CDS"/>
    <property type="molecule type" value="Genomic_DNA"/>
</dbReference>
<dbReference type="EMBL" id="AC115097">
    <property type="status" value="NOT_ANNOTATED_CDS"/>
    <property type="molecule type" value="Genomic_DNA"/>
</dbReference>
<dbReference type="EMBL" id="AC116021">
    <property type="status" value="NOT_ANNOTATED_CDS"/>
    <property type="molecule type" value="Genomic_DNA"/>
</dbReference>
<dbReference type="EMBL" id="AC127035">
    <property type="status" value="NOT_ANNOTATED_CDS"/>
    <property type="molecule type" value="Genomic_DNA"/>
</dbReference>
<dbReference type="EMBL" id="CH471064">
    <property type="protein sequence ID" value="EAW67996.1"/>
    <property type="molecule type" value="Genomic_DNA"/>
</dbReference>
<dbReference type="EMBL" id="CH471064">
    <property type="protein sequence ID" value="EAW67999.1"/>
    <property type="molecule type" value="Genomic_DNA"/>
</dbReference>
<dbReference type="EMBL" id="CH471064">
    <property type="protein sequence ID" value="EAW68001.1"/>
    <property type="molecule type" value="Genomic_DNA"/>
</dbReference>
<dbReference type="EMBL" id="BC045609">
    <property type="protein sequence ID" value="AAH45609.1"/>
    <property type="molecule type" value="mRNA"/>
</dbReference>
<dbReference type="CCDS" id="CCDS31475.1">
    <molecule id="Q9C0C7-4"/>
</dbReference>
<dbReference type="CCDS" id="CCDS73281.1">
    <molecule id="Q9C0C7-2"/>
</dbReference>
<dbReference type="CCDS" id="CCDS91466.1">
    <molecule id="Q9C0C7-1"/>
</dbReference>
<dbReference type="RefSeq" id="NP_001254711.1">
    <molecule id="Q9C0C7-5"/>
    <property type="nucleotide sequence ID" value="NM_001267782.2"/>
</dbReference>
<dbReference type="RefSeq" id="NP_001254712.1">
    <property type="nucleotide sequence ID" value="NM_001267783.1"/>
</dbReference>
<dbReference type="RefSeq" id="NP_001287660.1">
    <molecule id="Q9C0C7-2"/>
    <property type="nucleotide sequence ID" value="NM_001300731.2"/>
</dbReference>
<dbReference type="RefSeq" id="NP_001354397.1">
    <molecule id="Q9C0C7-1"/>
    <property type="nucleotide sequence ID" value="NM_001367468.1"/>
</dbReference>
<dbReference type="RefSeq" id="NP_001354400.1">
    <molecule id="Q9C0C7-4"/>
    <property type="nucleotide sequence ID" value="NM_001367471.1"/>
</dbReference>
<dbReference type="RefSeq" id="NP_001373940.1">
    <molecule id="Q9C0C7-1"/>
    <property type="nucleotide sequence ID" value="NM_001387011.1"/>
</dbReference>
<dbReference type="RefSeq" id="NP_060219.2">
    <molecule id="Q9C0C7-4"/>
    <property type="nucleotide sequence ID" value="NM_017749.3"/>
</dbReference>
<dbReference type="RefSeq" id="XP_005253066.1">
    <property type="nucleotide sequence ID" value="XM_005253009.3"/>
</dbReference>
<dbReference type="RefSeq" id="XP_005253068.1">
    <property type="nucleotide sequence ID" value="XM_005253011.3"/>
</dbReference>
<dbReference type="RefSeq" id="XP_005253071.1">
    <property type="nucleotide sequence ID" value="XM_005253014.3"/>
</dbReference>
<dbReference type="RefSeq" id="XP_006718322.1">
    <property type="nucleotide sequence ID" value="XM_006718259.2"/>
</dbReference>
<dbReference type="PDB" id="8WQR">
    <property type="method" value="EM"/>
    <property type="resolution" value="3.08 A"/>
    <property type="chains" value="B=1-204"/>
</dbReference>
<dbReference type="PDBsum" id="8WQR"/>
<dbReference type="EMDB" id="EMD-37752"/>
<dbReference type="SMR" id="Q9C0C7"/>
<dbReference type="BioGRID" id="120765">
    <property type="interactions" value="307"/>
</dbReference>
<dbReference type="ComplexPortal" id="CPX-2778">
    <property type="entry name" value="CRL4-AMBRA1 E3 ubiquitin ligase complex, CUL4B variant"/>
</dbReference>
<dbReference type="ComplexPortal" id="CPX-2797">
    <property type="entry name" value="CRL4-AMBRA1 E3 ubiquitin ligase complex, CUL4A variant"/>
</dbReference>
<dbReference type="DIP" id="DIP-53597N"/>
<dbReference type="FunCoup" id="Q9C0C7">
    <property type="interactions" value="3523"/>
</dbReference>
<dbReference type="IntAct" id="Q9C0C7">
    <property type="interactions" value="78"/>
</dbReference>
<dbReference type="MINT" id="Q9C0C7"/>
<dbReference type="STRING" id="9606.ENSP00000431926"/>
<dbReference type="GlyCosmos" id="Q9C0C7">
    <property type="glycosylation" value="3 sites, 1 glycan"/>
</dbReference>
<dbReference type="GlyGen" id="Q9C0C7">
    <property type="glycosylation" value="8 sites, 1 N-linked glycan (1 site), 1 O-linked glycan (6 sites)"/>
</dbReference>
<dbReference type="iPTMnet" id="Q9C0C7"/>
<dbReference type="PhosphoSitePlus" id="Q9C0C7"/>
<dbReference type="BioMuta" id="AMBRA1"/>
<dbReference type="DMDM" id="166215833"/>
<dbReference type="jPOST" id="Q9C0C7"/>
<dbReference type="MassIVE" id="Q9C0C7"/>
<dbReference type="PaxDb" id="9606-ENSP00000431926"/>
<dbReference type="PeptideAtlas" id="Q9C0C7"/>
<dbReference type="ProteomicsDB" id="32296"/>
<dbReference type="ProteomicsDB" id="79999">
    <molecule id="Q9C0C7-1"/>
</dbReference>
<dbReference type="ProteomicsDB" id="80000">
    <molecule id="Q9C0C7-2"/>
</dbReference>
<dbReference type="ProteomicsDB" id="80001">
    <molecule id="Q9C0C7-3"/>
</dbReference>
<dbReference type="ProteomicsDB" id="80002">
    <molecule id="Q9C0C7-4"/>
</dbReference>
<dbReference type="ProteomicsDB" id="80003">
    <molecule id="Q9C0C7-5"/>
</dbReference>
<dbReference type="Pumba" id="Q9C0C7"/>
<dbReference type="Antibodypedia" id="26331">
    <property type="antibodies" value="411 antibodies from 36 providers"/>
</dbReference>
<dbReference type="DNASU" id="55626"/>
<dbReference type="Ensembl" id="ENST00000314845.7">
    <molecule id="Q9C0C7-4"/>
    <property type="protein sequence ID" value="ENSP00000318313.3"/>
    <property type="gene ID" value="ENSG00000110497.15"/>
</dbReference>
<dbReference type="Ensembl" id="ENST00000458649.6">
    <molecule id="Q9C0C7-1"/>
    <property type="protein sequence ID" value="ENSP00000415327.2"/>
    <property type="gene ID" value="ENSG00000110497.15"/>
</dbReference>
<dbReference type="Ensembl" id="ENST00000528950.1">
    <molecule id="Q9C0C7-3"/>
    <property type="protein sequence ID" value="ENSP00000433945.1"/>
    <property type="gene ID" value="ENSG00000110497.15"/>
</dbReference>
<dbReference type="Ensembl" id="ENST00000534300.5">
    <molecule id="Q9C0C7-2"/>
    <property type="protein sequence ID" value="ENSP00000431926.1"/>
    <property type="gene ID" value="ENSG00000110497.15"/>
</dbReference>
<dbReference type="Ensembl" id="ENST00000683756.1">
    <molecule id="Q9C0C7-1"/>
    <property type="protein sequence ID" value="ENSP00000508322.1"/>
    <property type="gene ID" value="ENSG00000110497.15"/>
</dbReference>
<dbReference type="GeneID" id="55626"/>
<dbReference type="KEGG" id="hsa:55626"/>
<dbReference type="MANE-Select" id="ENST00000683756.1">
    <property type="protein sequence ID" value="ENSP00000508322.1"/>
    <property type="RefSeq nucleotide sequence ID" value="NM_001387011.1"/>
    <property type="RefSeq protein sequence ID" value="NP_001373940.1"/>
</dbReference>
<dbReference type="UCSC" id="uc001ncu.3">
    <molecule id="Q9C0C7-1"/>
    <property type="organism name" value="human"/>
</dbReference>
<dbReference type="AGR" id="HGNC:25990"/>
<dbReference type="CTD" id="55626"/>
<dbReference type="DisGeNET" id="55626"/>
<dbReference type="GeneCards" id="AMBRA1"/>
<dbReference type="HGNC" id="HGNC:25990">
    <property type="gene designation" value="AMBRA1"/>
</dbReference>
<dbReference type="HPA" id="ENSG00000110497">
    <property type="expression patterns" value="Low tissue specificity"/>
</dbReference>
<dbReference type="MIM" id="611359">
    <property type="type" value="gene"/>
</dbReference>
<dbReference type="neXtProt" id="NX_Q9C0C7"/>
<dbReference type="OpenTargets" id="ENSG00000110497"/>
<dbReference type="PharmGKB" id="PA162376307"/>
<dbReference type="VEuPathDB" id="HostDB:ENSG00000110497"/>
<dbReference type="eggNOG" id="KOG0266">
    <property type="taxonomic scope" value="Eukaryota"/>
</dbReference>
<dbReference type="GeneTree" id="ENSGT00390000016223"/>
<dbReference type="HOGENOM" id="CLU_008882_0_0_1"/>
<dbReference type="InParanoid" id="Q9C0C7"/>
<dbReference type="OMA" id="TTECCQH"/>
<dbReference type="OrthoDB" id="6363363at2759"/>
<dbReference type="PAN-GO" id="Q9C0C7">
    <property type="GO annotations" value="2 GO annotations based on evolutionary models"/>
</dbReference>
<dbReference type="PhylomeDB" id="Q9C0C7"/>
<dbReference type="TreeFam" id="TF328981"/>
<dbReference type="PathwayCommons" id="Q9C0C7"/>
<dbReference type="Reactome" id="R-HSA-1632852">
    <property type="pathway name" value="Macroautophagy"/>
</dbReference>
<dbReference type="SignaLink" id="Q9C0C7"/>
<dbReference type="SIGNOR" id="Q9C0C7"/>
<dbReference type="UniPathway" id="UPA00143"/>
<dbReference type="BioGRID-ORCS" id="55626">
    <property type="hits" value="119 hits in 1217 CRISPR screens"/>
</dbReference>
<dbReference type="ChiTaRS" id="AMBRA1">
    <property type="organism name" value="human"/>
</dbReference>
<dbReference type="GenomeRNAi" id="55626"/>
<dbReference type="Pharos" id="Q9C0C7">
    <property type="development level" value="Tbio"/>
</dbReference>
<dbReference type="PRO" id="PR:Q9C0C7"/>
<dbReference type="Proteomes" id="UP000005640">
    <property type="component" value="Chromosome 11"/>
</dbReference>
<dbReference type="RNAct" id="Q9C0C7">
    <property type="molecule type" value="protein"/>
</dbReference>
<dbReference type="Bgee" id="ENSG00000110497">
    <property type="expression patterns" value="Expressed in oocyte and 202 other cell types or tissues"/>
</dbReference>
<dbReference type="ExpressionAtlas" id="Q9C0C7">
    <property type="expression patterns" value="baseline and differential"/>
</dbReference>
<dbReference type="GO" id="GO:0005776">
    <property type="term" value="C:autophagosome"/>
    <property type="evidence" value="ECO:0007669"/>
    <property type="project" value="UniProtKB-SubCell"/>
</dbReference>
<dbReference type="GO" id="GO:0005930">
    <property type="term" value="C:axoneme"/>
    <property type="evidence" value="ECO:0000250"/>
    <property type="project" value="UniProtKB"/>
</dbReference>
<dbReference type="GO" id="GO:0080008">
    <property type="term" value="C:Cul4-RING E3 ubiquitin ligase complex"/>
    <property type="evidence" value="ECO:0000314"/>
    <property type="project" value="UniProtKB"/>
</dbReference>
<dbReference type="GO" id="GO:0005737">
    <property type="term" value="C:cytoplasm"/>
    <property type="evidence" value="ECO:0000314"/>
    <property type="project" value="UniProtKB"/>
</dbReference>
<dbReference type="GO" id="GO:0005856">
    <property type="term" value="C:cytoskeleton"/>
    <property type="evidence" value="ECO:0000314"/>
    <property type="project" value="UniProtKB"/>
</dbReference>
<dbReference type="GO" id="GO:0005829">
    <property type="term" value="C:cytosol"/>
    <property type="evidence" value="ECO:0000314"/>
    <property type="project" value="ParkinsonsUK-UCL"/>
</dbReference>
<dbReference type="GO" id="GO:0005783">
    <property type="term" value="C:endoplasmic reticulum"/>
    <property type="evidence" value="ECO:0007669"/>
    <property type="project" value="UniProtKB-SubCell"/>
</dbReference>
<dbReference type="GO" id="GO:0005925">
    <property type="term" value="C:focal adhesion"/>
    <property type="evidence" value="ECO:0007669"/>
    <property type="project" value="UniProtKB-SubCell"/>
</dbReference>
<dbReference type="GO" id="GO:0043231">
    <property type="term" value="C:intracellular membrane-bounded organelle"/>
    <property type="evidence" value="ECO:0000318"/>
    <property type="project" value="GO_Central"/>
</dbReference>
<dbReference type="GO" id="GO:0005741">
    <property type="term" value="C:mitochondrial outer membrane"/>
    <property type="evidence" value="ECO:0000303"/>
    <property type="project" value="ParkinsonsUK-UCL"/>
</dbReference>
<dbReference type="GO" id="GO:0005739">
    <property type="term" value="C:mitochondrion"/>
    <property type="evidence" value="ECO:0000314"/>
    <property type="project" value="UniProtKB"/>
</dbReference>
<dbReference type="GO" id="GO:0005634">
    <property type="term" value="C:nucleus"/>
    <property type="evidence" value="ECO:0000314"/>
    <property type="project" value="UniProtKB"/>
</dbReference>
<dbReference type="GO" id="GO:0048471">
    <property type="term" value="C:perinuclear region of cytoplasm"/>
    <property type="evidence" value="ECO:0000304"/>
    <property type="project" value="ParkinsonsUK-UCL"/>
</dbReference>
<dbReference type="GO" id="GO:0045335">
    <property type="term" value="C:phagocytic vesicle"/>
    <property type="evidence" value="ECO:0007669"/>
    <property type="project" value="Ensembl"/>
</dbReference>
<dbReference type="GO" id="GO:0051020">
    <property type="term" value="F:GTPase binding"/>
    <property type="evidence" value="ECO:0000353"/>
    <property type="project" value="UniProtKB"/>
</dbReference>
<dbReference type="GO" id="GO:0072542">
    <property type="term" value="F:protein phosphatase activator activity"/>
    <property type="evidence" value="ECO:0000314"/>
    <property type="project" value="UniProtKB"/>
</dbReference>
<dbReference type="GO" id="GO:0019903">
    <property type="term" value="F:protein phosphatase binding"/>
    <property type="evidence" value="ECO:0000314"/>
    <property type="project" value="UniProtKB"/>
</dbReference>
<dbReference type="GO" id="GO:0031625">
    <property type="term" value="F:ubiquitin protein ligase binding"/>
    <property type="evidence" value="ECO:0000353"/>
    <property type="project" value="ParkinsonsUK-UCL"/>
</dbReference>
<dbReference type="GO" id="GO:1990756">
    <property type="term" value="F:ubiquitin-like ligase-substrate adaptor activity"/>
    <property type="evidence" value="ECO:0000314"/>
    <property type="project" value="UniProt"/>
</dbReference>
<dbReference type="GO" id="GO:0000045">
    <property type="term" value="P:autophagosome assembly"/>
    <property type="evidence" value="ECO:0000314"/>
    <property type="project" value="UniProt"/>
</dbReference>
<dbReference type="GO" id="GO:0030154">
    <property type="term" value="P:cell differentiation"/>
    <property type="evidence" value="ECO:0007669"/>
    <property type="project" value="UniProtKB-KW"/>
</dbReference>
<dbReference type="GO" id="GO:0009267">
    <property type="term" value="P:cellular response to starvation"/>
    <property type="evidence" value="ECO:0007669"/>
    <property type="project" value="Ensembl"/>
</dbReference>
<dbReference type="GO" id="GO:0000423">
    <property type="term" value="P:mitophagy"/>
    <property type="evidence" value="ECO:0000314"/>
    <property type="project" value="ParkinsonsUK-UCL"/>
</dbReference>
<dbReference type="GO" id="GO:0010667">
    <property type="term" value="P:negative regulation of cardiac muscle cell apoptotic process"/>
    <property type="evidence" value="ECO:0007669"/>
    <property type="project" value="Ensembl"/>
</dbReference>
<dbReference type="GO" id="GO:0008285">
    <property type="term" value="P:negative regulation of cell population proliferation"/>
    <property type="evidence" value="ECO:0007669"/>
    <property type="project" value="Ensembl"/>
</dbReference>
<dbReference type="GO" id="GO:0043524">
    <property type="term" value="P:negative regulation of neuron apoptotic process"/>
    <property type="evidence" value="ECO:0007669"/>
    <property type="project" value="Ensembl"/>
</dbReference>
<dbReference type="GO" id="GO:0021915">
    <property type="term" value="P:neural tube development"/>
    <property type="evidence" value="ECO:0007669"/>
    <property type="project" value="Ensembl"/>
</dbReference>
<dbReference type="GO" id="GO:0010508">
    <property type="term" value="P:positive regulation of autophagy"/>
    <property type="evidence" value="ECO:0000314"/>
    <property type="project" value="UniProtKB"/>
</dbReference>
<dbReference type="GO" id="GO:1904544">
    <property type="term" value="P:positive regulation of free ubiquitin chain polymerization"/>
    <property type="evidence" value="ECO:0000314"/>
    <property type="project" value="UniProtKB"/>
</dbReference>
<dbReference type="GO" id="GO:1901526">
    <property type="term" value="P:positive regulation of mitophagy"/>
    <property type="evidence" value="ECO:0000314"/>
    <property type="project" value="UniProtKB"/>
</dbReference>
<dbReference type="GO" id="GO:0051897">
    <property type="term" value="P:positive regulation of phosphatidylinositol 3-kinase/protein kinase B signal transduction"/>
    <property type="evidence" value="ECO:0000314"/>
    <property type="project" value="ParkinsonsUK-UCL"/>
</dbReference>
<dbReference type="GO" id="GO:0045591">
    <property type="term" value="P:positive regulation of regulatory T cell differentiation"/>
    <property type="evidence" value="ECO:0000314"/>
    <property type="project" value="UniProtKB"/>
</dbReference>
<dbReference type="GO" id="GO:0043161">
    <property type="term" value="P:proteasome-mediated ubiquitin-dependent protein catabolic process"/>
    <property type="evidence" value="ECO:0000314"/>
    <property type="project" value="UniProt"/>
</dbReference>
<dbReference type="GO" id="GO:0000209">
    <property type="term" value="P:protein polyubiquitination"/>
    <property type="evidence" value="ECO:0000314"/>
    <property type="project" value="UniProtKB"/>
</dbReference>
<dbReference type="GO" id="GO:2000045">
    <property type="term" value="P:regulation of G1/S transition of mitotic cell cycle"/>
    <property type="evidence" value="ECO:0000314"/>
    <property type="project" value="UniProtKB"/>
</dbReference>
<dbReference type="GO" id="GO:0006357">
    <property type="term" value="P:regulation of transcription by RNA polymerase II"/>
    <property type="evidence" value="ECO:0007669"/>
    <property type="project" value="Ensembl"/>
</dbReference>
<dbReference type="GO" id="GO:0098780">
    <property type="term" value="P:response to mitochondrial depolarisation"/>
    <property type="evidence" value="ECO:0000314"/>
    <property type="project" value="ParkinsonsUK-UCL"/>
</dbReference>
<dbReference type="DisProt" id="DP01328"/>
<dbReference type="FunFam" id="2.130.10.10:FF:000057">
    <property type="entry name" value="Activating molecule in BECN1-regulated autophagy protein 1 isoform X1"/>
    <property type="match status" value="1"/>
</dbReference>
<dbReference type="Gene3D" id="2.130.10.10">
    <property type="entry name" value="YVTN repeat-like/Quinoprotein amine dehydrogenase"/>
    <property type="match status" value="1"/>
</dbReference>
<dbReference type="InterPro" id="IPR052596">
    <property type="entry name" value="AMBRA1_autophagy"/>
</dbReference>
<dbReference type="InterPro" id="IPR015943">
    <property type="entry name" value="WD40/YVTN_repeat-like_dom_sf"/>
</dbReference>
<dbReference type="InterPro" id="IPR019775">
    <property type="entry name" value="WD40_repeat_CS"/>
</dbReference>
<dbReference type="InterPro" id="IPR036322">
    <property type="entry name" value="WD40_repeat_dom_sf"/>
</dbReference>
<dbReference type="InterPro" id="IPR001680">
    <property type="entry name" value="WD40_rpt"/>
</dbReference>
<dbReference type="PANTHER" id="PTHR22874">
    <property type="entry name" value="ACTIVATING MOLECULE IN BECN1-REGULATED AUTOPHAGY PROTEIN 1"/>
    <property type="match status" value="1"/>
</dbReference>
<dbReference type="PANTHER" id="PTHR22874:SF1">
    <property type="entry name" value="ACTIVATING MOLECULE IN BECN1-REGULATED AUTOPHAGY PROTEIN 1"/>
    <property type="match status" value="1"/>
</dbReference>
<dbReference type="Pfam" id="PF00400">
    <property type="entry name" value="WD40"/>
    <property type="match status" value="1"/>
</dbReference>
<dbReference type="SMART" id="SM00320">
    <property type="entry name" value="WD40"/>
    <property type="match status" value="3"/>
</dbReference>
<dbReference type="SUPFAM" id="SSF50978">
    <property type="entry name" value="WD40 repeat-like"/>
    <property type="match status" value="1"/>
</dbReference>
<dbReference type="PROSITE" id="PS00678">
    <property type="entry name" value="WD_REPEATS_1"/>
    <property type="match status" value="1"/>
</dbReference>
<dbReference type="PROSITE" id="PS50082">
    <property type="entry name" value="WD_REPEATS_2"/>
    <property type="match status" value="1"/>
</dbReference>
<dbReference type="PROSITE" id="PS50294">
    <property type="entry name" value="WD_REPEATS_REGION"/>
    <property type="match status" value="1"/>
</dbReference>
<evidence type="ECO:0000250" key="1">
    <source>
        <dbReference type="UniProtKB" id="A2AH22"/>
    </source>
</evidence>
<evidence type="ECO:0000256" key="2">
    <source>
        <dbReference type="SAM" id="MobiDB-lite"/>
    </source>
</evidence>
<evidence type="ECO:0000269" key="3">
    <source>
    </source>
</evidence>
<evidence type="ECO:0000269" key="4">
    <source>
    </source>
</evidence>
<evidence type="ECO:0000269" key="5">
    <source>
    </source>
</evidence>
<evidence type="ECO:0000269" key="6">
    <source>
    </source>
</evidence>
<evidence type="ECO:0000269" key="7">
    <source>
    </source>
</evidence>
<evidence type="ECO:0000269" key="8">
    <source>
    </source>
</evidence>
<evidence type="ECO:0000269" key="9">
    <source>
    </source>
</evidence>
<evidence type="ECO:0000269" key="10">
    <source>
    </source>
</evidence>
<evidence type="ECO:0000269" key="11">
    <source>
    </source>
</evidence>
<evidence type="ECO:0000269" key="12">
    <source>
    </source>
</evidence>
<evidence type="ECO:0000269" key="13">
    <source>
    </source>
</evidence>
<evidence type="ECO:0000269" key="14">
    <source>
    </source>
</evidence>
<evidence type="ECO:0000269" key="15">
    <source>
    </source>
</evidence>
<evidence type="ECO:0000269" key="16">
    <source>
    </source>
</evidence>
<evidence type="ECO:0000269" key="17">
    <source>
    </source>
</evidence>
<evidence type="ECO:0000269" key="18">
    <source>
    </source>
</evidence>
<evidence type="ECO:0000269" key="19">
    <source>
    </source>
</evidence>
<evidence type="ECO:0000269" key="20">
    <source>
    </source>
</evidence>
<evidence type="ECO:0000269" key="21">
    <source>
    </source>
</evidence>
<evidence type="ECO:0000269" key="22">
    <source>
    </source>
</evidence>
<evidence type="ECO:0000269" key="23">
    <source>
    </source>
</evidence>
<evidence type="ECO:0000269" key="24">
    <source>
    </source>
</evidence>
<evidence type="ECO:0000303" key="25">
    <source>
    </source>
</evidence>
<evidence type="ECO:0000303" key="26">
    <source>
    </source>
</evidence>
<evidence type="ECO:0000303" key="27">
    <source>
    </source>
</evidence>
<evidence type="ECO:0000303" key="28">
    <source>
    </source>
</evidence>
<evidence type="ECO:0000303" key="29">
    <source>
    </source>
</evidence>
<evidence type="ECO:0000303" key="30">
    <source>
    </source>
</evidence>
<evidence type="ECO:0000305" key="31"/>
<evidence type="ECO:0000312" key="32">
    <source>
        <dbReference type="HGNC" id="HGNC:25990"/>
    </source>
</evidence>
<evidence type="ECO:0007744" key="33">
    <source>
    </source>
</evidence>
<evidence type="ECO:0007744" key="34">
    <source>
    </source>
</evidence>
<evidence type="ECO:0007744" key="35">
    <source>
    </source>
</evidence>
<evidence type="ECO:0007744" key="36">
    <source>
    </source>
</evidence>
<gene>
    <name evidence="29 32" type="primary">AMBRA1</name>
    <name evidence="28" type="synonym">DCAF3</name>
    <name evidence="25" type="synonym">KIAA1736</name>
</gene>
<proteinExistence type="evidence at protein level"/>
<organism>
    <name type="scientific">Homo sapiens</name>
    <name type="common">Human</name>
    <dbReference type="NCBI Taxonomy" id="9606"/>
    <lineage>
        <taxon>Eukaryota</taxon>
        <taxon>Metazoa</taxon>
        <taxon>Chordata</taxon>
        <taxon>Craniata</taxon>
        <taxon>Vertebrata</taxon>
        <taxon>Euteleostomi</taxon>
        <taxon>Mammalia</taxon>
        <taxon>Eutheria</taxon>
        <taxon>Euarchontoglires</taxon>
        <taxon>Primates</taxon>
        <taxon>Haplorrhini</taxon>
        <taxon>Catarrhini</taxon>
        <taxon>Hominidae</taxon>
        <taxon>Homo</taxon>
    </lineage>
</organism>
<name>AMRA1_HUMAN</name>
<protein>
    <recommendedName>
        <fullName evidence="29">Activating molecule in BECN1-regulated autophagy protein 1</fullName>
    </recommendedName>
    <alternativeName>
        <fullName evidence="28">DDB1- and CUL4-associated factor 3</fullName>
    </alternativeName>
</protein>